<evidence type="ECO:0000250" key="1"/>
<evidence type="ECO:0000250" key="2">
    <source>
        <dbReference type="UniProtKB" id="P63085"/>
    </source>
</evidence>
<evidence type="ECO:0000250" key="3">
    <source>
        <dbReference type="UniProtKB" id="P63086"/>
    </source>
</evidence>
<evidence type="ECO:0000255" key="4">
    <source>
        <dbReference type="PROSITE-ProRule" id="PRU00159"/>
    </source>
</evidence>
<evidence type="ECO:0000255" key="5">
    <source>
        <dbReference type="PROSITE-ProRule" id="PRU10027"/>
    </source>
</evidence>
<evidence type="ECO:0000269" key="6">
    <source>
    </source>
</evidence>
<evidence type="ECO:0000269" key="7">
    <source>
    </source>
</evidence>
<evidence type="ECO:0000269" key="8">
    <source>
    </source>
</evidence>
<evidence type="ECO:0000269" key="9">
    <source>
    </source>
</evidence>
<evidence type="ECO:0000269" key="10">
    <source>
    </source>
</evidence>
<evidence type="ECO:0000269" key="11">
    <source>
    </source>
</evidence>
<evidence type="ECO:0000269" key="12">
    <source>
    </source>
</evidence>
<evidence type="ECO:0000269" key="13">
    <source>
    </source>
</evidence>
<evidence type="ECO:0000269" key="14">
    <source>
    </source>
</evidence>
<evidence type="ECO:0000269" key="15">
    <source>
    </source>
</evidence>
<evidence type="ECO:0000269" key="16">
    <source>
    </source>
</evidence>
<evidence type="ECO:0000269" key="17">
    <source>
    </source>
</evidence>
<evidence type="ECO:0000269" key="18">
    <source>
    </source>
</evidence>
<evidence type="ECO:0000269" key="19">
    <source>
    </source>
</evidence>
<evidence type="ECO:0000269" key="20">
    <source>
    </source>
</evidence>
<evidence type="ECO:0000269" key="21">
    <source>
    </source>
</evidence>
<evidence type="ECO:0000269" key="22">
    <source>
    </source>
</evidence>
<evidence type="ECO:0000269" key="23">
    <source>
    </source>
</evidence>
<evidence type="ECO:0000269" key="24">
    <source>
    </source>
</evidence>
<evidence type="ECO:0000269" key="25">
    <source>
    </source>
</evidence>
<evidence type="ECO:0000269" key="26">
    <source>
    </source>
</evidence>
<evidence type="ECO:0000269" key="27">
    <source>
    </source>
</evidence>
<evidence type="ECO:0000269" key="28">
    <source>
    </source>
</evidence>
<evidence type="ECO:0000269" key="29">
    <source>
    </source>
</evidence>
<evidence type="ECO:0000269" key="30">
    <source>
    </source>
</evidence>
<evidence type="ECO:0000269" key="31">
    <source>
    </source>
</evidence>
<evidence type="ECO:0000269" key="32">
    <source>
    </source>
</evidence>
<evidence type="ECO:0000269" key="33">
    <source>
    </source>
</evidence>
<evidence type="ECO:0000269" key="34">
    <source>
    </source>
</evidence>
<evidence type="ECO:0000269" key="35">
    <source>
    </source>
</evidence>
<evidence type="ECO:0000269" key="36">
    <source>
    </source>
</evidence>
<evidence type="ECO:0000269" key="37">
    <source>
    </source>
</evidence>
<evidence type="ECO:0000269" key="38">
    <source>
    </source>
</evidence>
<evidence type="ECO:0000269" key="39">
    <source>
    </source>
</evidence>
<evidence type="ECO:0000269" key="40">
    <source>
    </source>
</evidence>
<evidence type="ECO:0000269" key="41">
    <source>
    </source>
</evidence>
<evidence type="ECO:0000269" key="42">
    <source>
    </source>
</evidence>
<evidence type="ECO:0000269" key="43">
    <source>
    </source>
</evidence>
<evidence type="ECO:0000269" key="44">
    <source>
    </source>
</evidence>
<evidence type="ECO:0000269" key="45">
    <source>
    </source>
</evidence>
<evidence type="ECO:0000269" key="46">
    <source>
    </source>
</evidence>
<evidence type="ECO:0000269" key="47">
    <source>
    </source>
</evidence>
<evidence type="ECO:0000269" key="48">
    <source>
    </source>
</evidence>
<evidence type="ECO:0000269" key="49">
    <source>
    </source>
</evidence>
<evidence type="ECO:0000269" key="50">
    <source>
    </source>
</evidence>
<evidence type="ECO:0000269" key="51">
    <source>
    </source>
</evidence>
<evidence type="ECO:0000269" key="52">
    <source>
    </source>
</evidence>
<evidence type="ECO:0000269" key="53">
    <source>
    </source>
</evidence>
<evidence type="ECO:0000269" key="54">
    <source>
    </source>
</evidence>
<evidence type="ECO:0000269" key="55">
    <source>
    </source>
</evidence>
<evidence type="ECO:0000269" key="56">
    <source>
    </source>
</evidence>
<evidence type="ECO:0000303" key="57">
    <source>
    </source>
</evidence>
<evidence type="ECO:0000303" key="58">
    <source>
    </source>
</evidence>
<evidence type="ECO:0000303" key="59">
    <source>
    </source>
</evidence>
<evidence type="ECO:0000303" key="60">
    <source>
    </source>
</evidence>
<evidence type="ECO:0000303" key="61">
    <source ref="3"/>
</evidence>
<evidence type="ECO:0000305" key="62"/>
<evidence type="ECO:0000312" key="63">
    <source>
        <dbReference type="HGNC" id="HGNC:6871"/>
    </source>
</evidence>
<evidence type="ECO:0007744" key="64">
    <source>
        <dbReference type="PDB" id="1PME"/>
    </source>
</evidence>
<evidence type="ECO:0007744" key="65">
    <source>
        <dbReference type="PDB" id="1TVO"/>
    </source>
</evidence>
<evidence type="ECO:0007744" key="66">
    <source>
        <dbReference type="PDB" id="1WZY"/>
    </source>
</evidence>
<evidence type="ECO:0007744" key="67">
    <source>
        <dbReference type="PDB" id="2OJG"/>
    </source>
</evidence>
<evidence type="ECO:0007744" key="68">
    <source>
        <dbReference type="PDB" id="2OJI"/>
    </source>
</evidence>
<evidence type="ECO:0007744" key="69">
    <source>
        <dbReference type="PDB" id="2OJJ"/>
    </source>
</evidence>
<evidence type="ECO:0007744" key="70">
    <source>
        <dbReference type="PDB" id="3D42"/>
    </source>
</evidence>
<evidence type="ECO:0007744" key="71">
    <source>
        <dbReference type="PDB" id="3D44"/>
    </source>
</evidence>
<evidence type="ECO:0007744" key="72">
    <source>
        <dbReference type="PDB" id="3I5Z"/>
    </source>
</evidence>
<evidence type="ECO:0007744" key="73">
    <source>
        <dbReference type="PDB" id="3I60"/>
    </source>
</evidence>
<evidence type="ECO:0007744" key="74">
    <source>
        <dbReference type="PDB" id="3W55"/>
    </source>
</evidence>
<evidence type="ECO:0007744" key="75">
    <source>
    </source>
</evidence>
<evidence type="ECO:0007744" key="76">
    <source>
    </source>
</evidence>
<evidence type="ECO:0007744" key="77">
    <source>
    </source>
</evidence>
<evidence type="ECO:0007744" key="78">
    <source>
    </source>
</evidence>
<evidence type="ECO:0007744" key="79">
    <source>
    </source>
</evidence>
<evidence type="ECO:0007744" key="80">
    <source>
    </source>
</evidence>
<evidence type="ECO:0007744" key="81">
    <source>
    </source>
</evidence>
<evidence type="ECO:0007744" key="82">
    <source>
    </source>
</evidence>
<evidence type="ECO:0007829" key="83">
    <source>
        <dbReference type="PDB" id="2Y9Q"/>
    </source>
</evidence>
<evidence type="ECO:0007829" key="84">
    <source>
        <dbReference type="PDB" id="3I5Z"/>
    </source>
</evidence>
<evidence type="ECO:0007829" key="85">
    <source>
        <dbReference type="PDB" id="4IZ5"/>
    </source>
</evidence>
<evidence type="ECO:0007829" key="86">
    <source>
        <dbReference type="PDB" id="4QTA"/>
    </source>
</evidence>
<evidence type="ECO:0007829" key="87">
    <source>
        <dbReference type="PDB" id="4ZZN"/>
    </source>
</evidence>
<evidence type="ECO:0007829" key="88">
    <source>
        <dbReference type="PDB" id="5AX3"/>
    </source>
</evidence>
<evidence type="ECO:0007829" key="89">
    <source>
        <dbReference type="PDB" id="5K4I"/>
    </source>
</evidence>
<evidence type="ECO:0007829" key="90">
    <source>
        <dbReference type="PDB" id="5NHO"/>
    </source>
</evidence>
<evidence type="ECO:0007829" key="91">
    <source>
        <dbReference type="PDB" id="5V62"/>
    </source>
</evidence>
<evidence type="ECO:0007829" key="92">
    <source>
        <dbReference type="PDB" id="6G92"/>
    </source>
</evidence>
<evidence type="ECO:0007829" key="93">
    <source>
        <dbReference type="PDB" id="7X4U"/>
    </source>
</evidence>
<evidence type="ECO:0007829" key="94">
    <source>
        <dbReference type="PDB" id="8AOG"/>
    </source>
</evidence>
<evidence type="ECO:0007829" key="95">
    <source>
        <dbReference type="PDB" id="8AOJ"/>
    </source>
</evidence>
<evidence type="ECO:0007829" key="96">
    <source>
        <dbReference type="PDB" id="8PSR"/>
    </source>
</evidence>
<reference key="1">
    <citation type="journal article" date="1992" name="Biochem. Biophys. Res. Commun.">
        <title>Extracellular signal-regulated kinases in T cells: characterization of human ERK1 and ERK2 cDNAs.</title>
        <authorList>
            <person name="Owaki H."/>
            <person name="Makar R."/>
            <person name="Boulton T.G."/>
            <person name="Cobb M.H."/>
            <person name="Geppert T.D."/>
        </authorList>
    </citation>
    <scope>NUCLEOTIDE SEQUENCE [MRNA] (ISOFORM 1)</scope>
</reference>
<reference key="2">
    <citation type="journal article" date="1992" name="FEBS Lett.">
        <title>Heterogeneous expression of four MAP kinase isoforms in human tissues.</title>
        <authorList>
            <person name="Gonzalez F.A."/>
            <person name="Raden D.L."/>
            <person name="Rigby M.R."/>
            <person name="Davis R.J."/>
        </authorList>
    </citation>
    <scope>NUCLEOTIDE SEQUENCE [MRNA] (ISOFORM 1)</scope>
</reference>
<reference key="3">
    <citation type="submission" date="2006-02" db="EMBL/GenBank/DDBJ databases">
        <title>Identification of dominant negative Erk1/2 variants in cancer cells.</title>
        <authorList>
            <person name="Cheng H."/>
            <person name="Ren S."/>
            <person name="Qiu R."/>
            <person name="Wang M."/>
            <person name="Feng Y.H."/>
        </authorList>
    </citation>
    <scope>NUCLEOTIDE SEQUENCE [MRNA] (ISOFORM 2)</scope>
    <scope>ALTERNATIVE SPLICING</scope>
</reference>
<reference key="4">
    <citation type="journal article" date="1999" name="Nature">
        <title>The DNA sequence of human chromosome 22.</title>
        <authorList>
            <person name="Dunham I."/>
            <person name="Hunt A.R."/>
            <person name="Collins J.E."/>
            <person name="Bruskiewich R."/>
            <person name="Beare D.M."/>
            <person name="Clamp M."/>
            <person name="Smink L.J."/>
            <person name="Ainscough R."/>
            <person name="Almeida J.P."/>
            <person name="Babbage A.K."/>
            <person name="Bagguley C."/>
            <person name="Bailey J."/>
            <person name="Barlow K.F."/>
            <person name="Bates K.N."/>
            <person name="Beasley O.P."/>
            <person name="Bird C.P."/>
            <person name="Blakey S.E."/>
            <person name="Bridgeman A.M."/>
            <person name="Buck D."/>
            <person name="Burgess J."/>
            <person name="Burrill W.D."/>
            <person name="Burton J."/>
            <person name="Carder C."/>
            <person name="Carter N.P."/>
            <person name="Chen Y."/>
            <person name="Clark G."/>
            <person name="Clegg S.M."/>
            <person name="Cobley V.E."/>
            <person name="Cole C.G."/>
            <person name="Collier R.E."/>
            <person name="Connor R."/>
            <person name="Conroy D."/>
            <person name="Corby N.R."/>
            <person name="Coville G.J."/>
            <person name="Cox A.V."/>
            <person name="Davis J."/>
            <person name="Dawson E."/>
            <person name="Dhami P.D."/>
            <person name="Dockree C."/>
            <person name="Dodsworth S.J."/>
            <person name="Durbin R.M."/>
            <person name="Ellington A.G."/>
            <person name="Evans K.L."/>
            <person name="Fey J.M."/>
            <person name="Fleming K."/>
            <person name="French L."/>
            <person name="Garner A.A."/>
            <person name="Gilbert J.G.R."/>
            <person name="Goward M.E."/>
            <person name="Grafham D.V."/>
            <person name="Griffiths M.N.D."/>
            <person name="Hall C."/>
            <person name="Hall R.E."/>
            <person name="Hall-Tamlyn G."/>
            <person name="Heathcott R.W."/>
            <person name="Ho S."/>
            <person name="Holmes S."/>
            <person name="Hunt S.E."/>
            <person name="Jones M.C."/>
            <person name="Kershaw J."/>
            <person name="Kimberley A.M."/>
            <person name="King A."/>
            <person name="Laird G.K."/>
            <person name="Langford C.F."/>
            <person name="Leversha M.A."/>
            <person name="Lloyd C."/>
            <person name="Lloyd D.M."/>
            <person name="Martyn I.D."/>
            <person name="Mashreghi-Mohammadi M."/>
            <person name="Matthews L.H."/>
            <person name="Mccann O.T."/>
            <person name="Mcclay J."/>
            <person name="Mclaren S."/>
            <person name="McMurray A.A."/>
            <person name="Milne S.A."/>
            <person name="Mortimore B.J."/>
            <person name="Odell C.N."/>
            <person name="Pavitt R."/>
            <person name="Pearce A.V."/>
            <person name="Pearson D."/>
            <person name="Phillimore B.J.C.T."/>
            <person name="Phillips S.H."/>
            <person name="Plumb R.W."/>
            <person name="Ramsay H."/>
            <person name="Ramsey Y."/>
            <person name="Rogers L."/>
            <person name="Ross M.T."/>
            <person name="Scott C.E."/>
            <person name="Sehra H.K."/>
            <person name="Skuce C.D."/>
            <person name="Smalley S."/>
            <person name="Smith M.L."/>
            <person name="Soderlund C."/>
            <person name="Spragon L."/>
            <person name="Steward C.A."/>
            <person name="Sulston J.E."/>
            <person name="Swann R.M."/>
            <person name="Vaudin M."/>
            <person name="Wall M."/>
            <person name="Wallis J.M."/>
            <person name="Whiteley M.N."/>
            <person name="Willey D.L."/>
            <person name="Williams L."/>
            <person name="Williams S.A."/>
            <person name="Williamson H."/>
            <person name="Wilmer T.E."/>
            <person name="Wilming L."/>
            <person name="Wright C.L."/>
            <person name="Hubbard T."/>
            <person name="Bentley D.R."/>
            <person name="Beck S."/>
            <person name="Rogers J."/>
            <person name="Shimizu N."/>
            <person name="Minoshima S."/>
            <person name="Kawasaki K."/>
            <person name="Sasaki T."/>
            <person name="Asakawa S."/>
            <person name="Kudoh J."/>
            <person name="Shintani A."/>
            <person name="Shibuya K."/>
            <person name="Yoshizaki Y."/>
            <person name="Aoki N."/>
            <person name="Mitsuyama S."/>
            <person name="Roe B.A."/>
            <person name="Chen F."/>
            <person name="Chu L."/>
            <person name="Crabtree J."/>
            <person name="Deschamps S."/>
            <person name="Do A."/>
            <person name="Do T."/>
            <person name="Dorman A."/>
            <person name="Fang F."/>
            <person name="Fu Y."/>
            <person name="Hu P."/>
            <person name="Hua A."/>
            <person name="Kenton S."/>
            <person name="Lai H."/>
            <person name="Lao H.I."/>
            <person name="Lewis J."/>
            <person name="Lewis S."/>
            <person name="Lin S.-P."/>
            <person name="Loh P."/>
            <person name="Malaj E."/>
            <person name="Nguyen T."/>
            <person name="Pan H."/>
            <person name="Phan S."/>
            <person name="Qi S."/>
            <person name="Qian Y."/>
            <person name="Ray L."/>
            <person name="Ren Q."/>
            <person name="Shaull S."/>
            <person name="Sloan D."/>
            <person name="Song L."/>
            <person name="Wang Q."/>
            <person name="Wang Y."/>
            <person name="Wang Z."/>
            <person name="White J."/>
            <person name="Willingham D."/>
            <person name="Wu H."/>
            <person name="Yao Z."/>
            <person name="Zhan M."/>
            <person name="Zhang G."/>
            <person name="Chissoe S."/>
            <person name="Murray J."/>
            <person name="Miller N."/>
            <person name="Minx P."/>
            <person name="Fulton R."/>
            <person name="Johnson D."/>
            <person name="Bemis G."/>
            <person name="Bentley D."/>
            <person name="Bradshaw H."/>
            <person name="Bourne S."/>
            <person name="Cordes M."/>
            <person name="Du Z."/>
            <person name="Fulton L."/>
            <person name="Goela D."/>
            <person name="Graves T."/>
            <person name="Hawkins J."/>
            <person name="Hinds K."/>
            <person name="Kemp K."/>
            <person name="Latreille P."/>
            <person name="Layman D."/>
            <person name="Ozersky P."/>
            <person name="Rohlfing T."/>
            <person name="Scheet P."/>
            <person name="Walker C."/>
            <person name="Wamsley A."/>
            <person name="Wohldmann P."/>
            <person name="Pepin K."/>
            <person name="Nelson J."/>
            <person name="Korf I."/>
            <person name="Bedell J.A."/>
            <person name="Hillier L.W."/>
            <person name="Mardis E."/>
            <person name="Waterston R."/>
            <person name="Wilson R."/>
            <person name="Emanuel B.S."/>
            <person name="Shaikh T."/>
            <person name="Kurahashi H."/>
            <person name="Saitta S."/>
            <person name="Budarf M.L."/>
            <person name="McDermid H.E."/>
            <person name="Johnson A."/>
            <person name="Wong A.C.C."/>
            <person name="Morrow B.E."/>
            <person name="Edelmann L."/>
            <person name="Kim U.J."/>
            <person name="Shizuya H."/>
            <person name="Simon M.I."/>
            <person name="Dumanski J.P."/>
            <person name="Peyrard M."/>
            <person name="Kedra D."/>
            <person name="Seroussi E."/>
            <person name="Fransson I."/>
            <person name="Tapia I."/>
            <person name="Bruder C.E."/>
            <person name="O'Brien K.P."/>
            <person name="Wilkinson P."/>
            <person name="Bodenteich A."/>
            <person name="Hartman K."/>
            <person name="Hu X."/>
            <person name="Khan A.S."/>
            <person name="Lane L."/>
            <person name="Tilahun Y."/>
            <person name="Wright H."/>
        </authorList>
    </citation>
    <scope>NUCLEOTIDE SEQUENCE [LARGE SCALE GENOMIC DNA]</scope>
</reference>
<reference key="5">
    <citation type="journal article" date="2004" name="Genome Res.">
        <title>The status, quality, and expansion of the NIH full-length cDNA project: the Mammalian Gene Collection (MGC).</title>
        <authorList>
            <consortium name="The MGC Project Team"/>
        </authorList>
    </citation>
    <scope>NUCLEOTIDE SEQUENCE [LARGE SCALE MRNA] (ISOFORM 1)</scope>
    <source>
        <tissue>Lung</tissue>
    </source>
</reference>
<reference key="6">
    <citation type="journal article" date="2003" name="Nat. Biotechnol.">
        <title>Exploring proteomes and analyzing protein processing by mass spectrometric identification of sorted N-terminal peptides.</title>
        <authorList>
            <person name="Gevaert K."/>
            <person name="Goethals M."/>
            <person name="Martens L."/>
            <person name="Van Damme J."/>
            <person name="Staes A."/>
            <person name="Thomas G.R."/>
            <person name="Vandekerckhove J."/>
        </authorList>
    </citation>
    <scope>PROTEIN SEQUENCE OF 2-15</scope>
    <scope>ACETYLATION AT ALA-2</scope>
    <source>
        <tissue>Platelet</tissue>
    </source>
</reference>
<reference key="7">
    <citation type="journal article" date="1995" name="EMBO J.">
        <title>ERF: an ETS domain protein with strong transcriptional repressor activity, can suppress ets-associated tumorigenesis and is regulated by phosphorylation during cell cycle and mitogenic stimulation.</title>
        <authorList>
            <person name="Sgouras D.N."/>
            <person name="Athanasiou M.A."/>
            <person name="Beal G.J. Jr."/>
            <person name="Fisher R.J."/>
            <person name="Blair D.G."/>
            <person name="Mavrothalassitis G.J."/>
        </authorList>
    </citation>
    <scope>FUNCTION IN PHOSPHORYLATION OF ERF</scope>
</reference>
<reference key="8">
    <citation type="journal article" date="1996" name="Mol. Cell. Biol.">
        <title>3pK, a new mitogen-activated protein kinase-activated protein kinase located in the small cell lung cancer tumor suppressor gene region.</title>
        <authorList>
            <person name="Sithanandam G."/>
            <person name="Latif F."/>
            <person name="Duh F.-M."/>
            <person name="Bernal R."/>
            <person name="Smola U."/>
            <person name="Li H."/>
            <person name="Kuzmin I."/>
            <person name="Wixler V."/>
            <person name="Geil L."/>
            <person name="Shrestha S."/>
            <person name="Lloyd P.A."/>
            <person name="Bader S."/>
            <person name="Sekido Y."/>
            <person name="Tartof K.D."/>
            <person name="Kashuba V.I."/>
            <person name="Zabarovsky E.R."/>
            <person name="Dean M."/>
            <person name="Klein G."/>
            <person name="Lerman M.I."/>
            <person name="Minna J.D."/>
            <person name="Rapp U.R."/>
            <person name="Allikmets R."/>
        </authorList>
    </citation>
    <scope>FUNCTION IN PHOSPHORYLATION OF MAPKAPK3</scope>
</reference>
<reference key="9">
    <citation type="journal article" date="1996" name="J. Virol.">
        <title>Human immunodeficiency virus type 1 Nef binds directly to LCK and mitogen-activated protein kinase, inhibiting kinase activity.</title>
        <authorList>
            <person name="Greenway A.L."/>
            <person name="Azad A."/>
            <person name="Mills J."/>
            <person name="McPhee D.A."/>
        </authorList>
    </citation>
    <scope>INTERACTION WITH HIV-1 NEF (MICROBIAL INFECTION)</scope>
</reference>
<reference key="10">
    <citation type="journal article" date="1998" name="Biochem. Biophys. Res. Commun.">
        <title>MAPKAPK5, a novel mitogen-activated protein kinase (MAPK)-activated protein kinase, is a substrate of the extracellular-regulated kinase (ERK) and p38 kinase.</title>
        <authorList>
            <person name="Ni H."/>
            <person name="Wang X.S."/>
            <person name="Diener K."/>
            <person name="Yao Z."/>
        </authorList>
    </citation>
    <scope>FUNCTION IN PHOSPHORYLATION OF MAPKAPK5</scope>
</reference>
<reference key="11">
    <citation type="journal article" date="1998" name="EMBO J.">
        <title>Mitogen- and stress-activated protein kinase-1 (MSK1) is directly activated by MAPK and SAPK2/p38, and may mediate activation of CREB.</title>
        <authorList>
            <person name="Deak M."/>
            <person name="Clifton A.D."/>
            <person name="Lucocq J.M."/>
            <person name="Alessi D.R."/>
        </authorList>
    </citation>
    <scope>FUNCTION IN PHOSPHORYLATION OF RPS6KA5/MSK1</scope>
</reference>
<reference key="12">
    <citation type="journal article" date="1998" name="Genes Dev.">
        <title>Antigen receptor signaling induces MAP kinase-mediated phosphorylation and degradation of the BCL-6 transcription factor.</title>
        <authorList>
            <person name="Niu H."/>
            <person name="Ye B.H."/>
            <person name="Dalla-Favera R."/>
        </authorList>
    </citation>
    <scope>FUNCTION IN PHOSPHORYLATION OF BCL6</scope>
</reference>
<reference key="13">
    <citation type="journal article" date="1998" name="J. Cell Sci.">
        <title>Isolation of the human genes encoding the Pyst1 and Pyst2 phosphatases: characterisation of Pyst2 as a cytosolic dual-specificity MAP kinase phosphatase and its catalytic activation by both MAP and SAP kinases.</title>
        <authorList>
            <person name="Dowd S."/>
            <person name="Sneddon A.A."/>
            <person name="Keyse S.M."/>
        </authorList>
    </citation>
    <scope>INTERACTION WITH DUSP7</scope>
</reference>
<reference key="14">
    <citation type="journal article" date="1998" name="Science">
        <title>Catalytic activation of the phosphatase MKP-3 by ERK2 mitogen-activated protein kinase.</title>
        <authorList>
            <person name="Camps M."/>
            <person name="Nichols A."/>
            <person name="Gillieron C."/>
            <person name="Antonsson B."/>
            <person name="Muda M."/>
            <person name="Chabert C."/>
            <person name="Boschert U."/>
            <person name="Arkinstall S."/>
        </authorList>
    </citation>
    <scope>INTERACTION WITH DUSP6</scope>
    <scope>FUNCTION</scope>
</reference>
<reference key="15">
    <citation type="journal article" date="1999" name="J. Biol. Chem.">
        <title>Extracellular regulated kinases (ERK) 1 and ERK2 are authentic substrates for the dual-specificity protein-tyrosine phosphatase VHR. A novel role in down-regulating the ERK pathway.</title>
        <authorList>
            <person name="Todd J.L."/>
            <person name="Tanner K.G."/>
            <person name="Denu J.M."/>
        </authorList>
    </citation>
    <scope>DEPHOSPHORYLATION BY DUSP3</scope>
</reference>
<reference key="16">
    <citation type="journal article" date="1999" name="Oncogene">
        <title>ERK activation induces phosphorylation of Elk-1 at multiple S/T-P motifs to high stoichiometry.</title>
        <authorList>
            <person name="Cruzalegui F.H."/>
            <person name="Cano E."/>
            <person name="Treisman R."/>
        </authorList>
    </citation>
    <scope>FUNCTION IN PHOSPHORYLATION OF ELK1</scope>
</reference>
<reference key="17">
    <citation type="journal article" date="1999" name="Science">
        <title>Reduced MAP kinase phosphatase-1 degradation after p42/p44MAPK-dependent phosphorylation.</title>
        <authorList>
            <person name="Brondello J.M."/>
            <person name="Pouyssegur J."/>
            <person name="McKenzie F.R."/>
        </authorList>
    </citation>
    <scope>FUNCTION IN PHOSPHORYLATION OF DUSP1</scope>
</reference>
<reference key="18">
    <citation type="journal article" date="2001" name="Mol. Cell. Biol.">
        <title>The mitogen-activated protein kinase signal-integrating kinase Mnk2 is a eukaryotic initiation factor 4E kinase with high levels of basal activity in mammalian cells.</title>
        <authorList>
            <person name="Scheper G.C."/>
            <person name="Morrice N.A."/>
            <person name="Kleijn M."/>
            <person name="Proud C.G."/>
        </authorList>
    </citation>
    <scope>FUNCTION AS MKNK2 KINASE</scope>
</reference>
<reference key="19">
    <citation type="journal article" date="2002" name="EMBO J.">
        <title>Growth factors can activate ATF2 via a two-step mechanism: phosphorylation of Thr71 through the Ras-MEK-ERK pathway and of Thr69 through RalGDS-Src-p38.</title>
        <authorList>
            <person name="Ouwens D.M."/>
            <person name="de Ruiter N.D."/>
            <person name="van der Zon G.C."/>
            <person name="Carter A.P."/>
            <person name="Schouten J."/>
            <person name="van der Burgt C."/>
            <person name="Kooistra K."/>
            <person name="Bos J.L."/>
            <person name="Maassen J.A."/>
            <person name="van Dam H."/>
        </authorList>
    </citation>
    <scope>FUNCTION IN PHOSPHORYLATION OF ATF2</scope>
</reference>
<reference key="20">
    <citation type="journal article" date="2002" name="EMBO J.">
        <title>IEX-1: a new ERK substrate involved in both ERK survival activity and ERK activation.</title>
        <authorList>
            <person name="Garcia J."/>
            <person name="Ye Y."/>
            <person name="Arranz V."/>
            <person name="Letourneux C."/>
            <person name="Pezeron G."/>
            <person name="Porteu F."/>
        </authorList>
    </citation>
    <scope>FUNCTION IN PHOSPHORYLATION OF IER3</scope>
    <scope>INTERACTION WITH IER3</scope>
    <scope>ACTIVITY REGULATION</scope>
</reference>
<reference key="21">
    <citation type="journal article" date="2002" name="J. Biol. Chem.">
        <title>Insulin receptor substrate 4 associates with the protein IRAS.</title>
        <authorList>
            <person name="Sano H."/>
            <person name="Liu S.C.H."/>
            <person name="Lane W.S."/>
            <person name="Piletz J.E."/>
            <person name="Lienhard G.E."/>
        </authorList>
    </citation>
    <scope>INTERACTION WITH NISCH</scope>
</reference>
<reference key="22">
    <citation type="journal article" date="2003" name="Biol. Chem.">
        <title>EGFR and FGFR signaling through FRS2 is subject to negative feedback control by ERK1/2.</title>
        <authorList>
            <person name="Wu Y."/>
            <person name="Chen Z."/>
            <person name="Ullrich A."/>
        </authorList>
    </citation>
    <scope>FUNCTION IN PHOSPHORYLATION OF FRS2</scope>
</reference>
<reference key="23">
    <citation type="journal article" date="2003" name="J. Biol. Chem.">
        <title>Activation of ERK induces phosphorylation of MAPK phosphatase-7, a JNK specific phosphatase, at Ser-446.</title>
        <authorList>
            <person name="Masuda K."/>
            <person name="Shima H."/>
            <person name="Katagiri C."/>
            <person name="Kikuchi K."/>
        </authorList>
    </citation>
    <scope>FUNCTION IN PHOSPHORYLATION OF DUSP16</scope>
</reference>
<reference key="24">
    <citation type="journal article" date="2003" name="Nat. Cell Biol.">
        <title>Inhibition of caspase-9 through phosphorylation at Thr 125 by ERK MAPK.</title>
        <authorList>
            <person name="Allan L.A."/>
            <person name="Morrice N."/>
            <person name="Brady S."/>
            <person name="Magee G."/>
            <person name="Pathak S."/>
            <person name="Clarke P.R."/>
        </authorList>
    </citation>
    <scope>FUNCTION IN PHOSPHORYLATION OF CASP9</scope>
</reference>
<reference key="25">
    <citation type="journal article" date="2004" name="Biochem. Biophys. Res. Commun.">
        <title>Nek2A specifies the centrosomal localization of Erk2.</title>
        <authorList>
            <person name="Lou Y."/>
            <person name="Xie W."/>
            <person name="Zhang D.F."/>
            <person name="Yao J.H."/>
            <person name="Luo Z.F."/>
            <person name="Wang Y.Z."/>
            <person name="Shi Y.Y."/>
            <person name="Yao X.B."/>
        </authorList>
    </citation>
    <scope>SUBCELLULAR LOCATION</scope>
    <scope>INTERACTION WITH NEK2</scope>
</reference>
<reference key="26">
    <citation type="journal article" date="2004" name="Cell. Mol. Life Sci.">
        <title>Signal transduction via the stem cell factor receptor/c-Kit.</title>
        <authorList>
            <person name="Ronnstrand L."/>
        </authorList>
    </citation>
    <scope>REVIEW ON ROLE IN KIT SIGNALING</scope>
</reference>
<reference key="27">
    <citation type="journal article" date="2004" name="J. Biol. Chem.">
        <title>Extracellular signal-regulated kinase activated by epidermal growth factor and cell adhesion interacts with and phosphorylates vinexin.</title>
        <authorList>
            <person name="Mitsushima M."/>
            <person name="Suwa A."/>
            <person name="Amachi T."/>
            <person name="Ueda K."/>
            <person name="Kioka N."/>
        </authorList>
    </citation>
    <scope>FUNCTION IN PHOSPHORYLATION OF SORBS3</scope>
</reference>
<reference key="28">
    <citation type="journal article" date="2004" name="Oncogene">
        <title>MCL1 is phosphorylated in the PEST region and stabilized upon ERK activation in viable cells, and at additional sites with cytotoxic okadaic acid or taxol.</title>
        <authorList>
            <person name="Domina A.M."/>
            <person name="Vrana J.A."/>
            <person name="Gregory M.A."/>
            <person name="Hann S.R."/>
            <person name="Craig R.W."/>
        </authorList>
    </citation>
    <scope>FUNCTION IN PHOSPHORYLATION OF MCL1</scope>
</reference>
<reference key="29">
    <citation type="journal article" date="2005" name="Biochemistry">
        <title>Phosphorylation of Grb10 by mitogen-activated protein kinase: identification of Ser150 and Ser476 of human Grb10zeta as major phosphorylation sites.</title>
        <authorList>
            <person name="Langlais P."/>
            <person name="Wang C."/>
            <person name="Dong L.Q."/>
            <person name="Carroll C.A."/>
            <person name="Weintraub S.T."/>
            <person name="Liu F."/>
        </authorList>
    </citation>
    <scope>FUNCTION IN PHOSPHORYLATION OF GRB10</scope>
</reference>
<reference key="30">
    <citation type="journal article" date="2005" name="EMBO J.">
        <title>Bidirectional signals transduced by DAPK-ERK interaction promote the apoptotic effect of DAPK.</title>
        <authorList>
            <person name="Chen C.H."/>
            <person name="Wang W.J."/>
            <person name="Kuo J.C."/>
            <person name="Tsai H.C."/>
            <person name="Lin J.R."/>
            <person name="Chang Z.F."/>
            <person name="Chen R.H."/>
        </authorList>
    </citation>
    <scope>FUNCTION IN PHOSPHORYLATION OF DAPK1</scope>
    <scope>SUBCELLULAR LOCATION</scope>
    <scope>INTERACTION WITH DAPK1</scope>
</reference>
<reference key="31">
    <citation type="journal article" date="2005" name="J. Mol. Biol.">
        <title>New insights into the catalytic activation of the MAPK phosphatase PAC-1 induced by its substrate MAPK ERK2 binding.</title>
        <authorList>
            <person name="Zhang Q."/>
            <person name="Muller M."/>
            <person name="Chen C.H."/>
            <person name="Zeng L."/>
            <person name="Farooq A."/>
            <person name="Zhou M.M."/>
        </authorList>
    </citation>
    <scope>DEPHOSPHORYLATION AT THR-185 AND TYR-187 BY DUSP2</scope>
</reference>
<reference key="32">
    <citation type="journal article" date="2005" name="J. Biol. Chem.">
        <title>Phosphorylation of serine 147 of tis21/BTG2/pc3 by p-Erk1/2 induces Pin-1 binding in cytoplasm and cell death.</title>
        <authorList>
            <person name="Hong J.W."/>
            <person name="Ryu M.S."/>
            <person name="Lim I.K."/>
        </authorList>
    </citation>
    <scope>FUNCTION IN PHOSPHORYLATION OF BTG2</scope>
</reference>
<reference key="33">
    <citation type="journal article" date="2005" name="Mol. Cell">
        <title>Regulation of Raf-1 by direct feedback phosphorylation.</title>
        <authorList>
            <person name="Dougherty M.K."/>
            <person name="Muller J."/>
            <person name="Ritt D.A."/>
            <person name="Zhou M."/>
            <person name="Zhou X.Z."/>
            <person name="Copeland T.D."/>
            <person name="Conrads T.P."/>
            <person name="Veenstra T.D."/>
            <person name="Lu K.P."/>
            <person name="Morrison D.K."/>
        </authorList>
    </citation>
    <scope>FUNCTION IN PHOSPHORYLATION OF RAF1</scope>
</reference>
<reference key="34">
    <citation type="journal article" date="2006" name="Cell">
        <title>Global, in vivo, and site-specific phosphorylation dynamics in signaling networks.</title>
        <authorList>
            <person name="Olsen J.V."/>
            <person name="Blagoev B."/>
            <person name="Gnad F."/>
            <person name="Macek B."/>
            <person name="Kumar C."/>
            <person name="Mortensen P."/>
            <person name="Mann M."/>
        </authorList>
    </citation>
    <scope>IDENTIFICATION BY MASS SPECTROMETRY [LARGE SCALE ANALYSIS]</scope>
    <source>
        <tissue>Cervix carcinoma</tissue>
    </source>
</reference>
<reference key="35">
    <citation type="journal article" date="2008" name="Biochem. Biophys. Res. Commun.">
        <title>ERK1/2 phosphorylate GEF-H1 to enhance its guanine nucleotide exchange activity toward RhoA.</title>
        <authorList>
            <person name="Fujishiro S.H."/>
            <person name="Tanimura S."/>
            <person name="Mure S."/>
            <person name="Kashimoto Y."/>
            <person name="Watanabe K."/>
            <person name="Kohno M."/>
        </authorList>
    </citation>
    <scope>INTERACTION WITH ARHGEF2</scope>
</reference>
<reference key="36">
    <citation type="journal article" date="2006" name="Mol. Cell. Biol.">
        <title>Association and regulation of heat shock transcription factor 4b with both extracellular signal-regulated kinase mitogen-activated protein kinase and dual-specificity tyrosine phosphatase DUSP26.</title>
        <authorList>
            <person name="Hu Y."/>
            <person name="Mivechi N.F."/>
        </authorList>
    </citation>
    <scope>FUNCTION</scope>
    <scope>INTERACTION WITH HSF4</scope>
</reference>
<reference key="37">
    <citation type="journal article" date="2007" name="FEBS Lett.">
        <title>ALK activation induces Shc and FRS2 recruitment: Signaling and phenotypic outcomes in PC12 cells differentiation.</title>
        <authorList>
            <person name="Degoutin J."/>
            <person name="Vigny M."/>
            <person name="Gouzi J.Y."/>
        </authorList>
    </citation>
    <scope>PHOSPHORYLATION</scope>
</reference>
<reference key="38">
    <citation type="journal article" date="2008" name="Biochem. J.">
        <title>Mutations of beta-arrestin 2 that limit self-association also interfere with interactions with the beta2-adrenoceptor and the ERK1/2 MAPKs: implications for beta2-adrenoceptor signalling via the ERK1/2 MAPKs.</title>
        <authorList>
            <person name="Xu T.-R."/>
            <person name="Baillie G.S."/>
            <person name="Bhari N."/>
            <person name="Houslay T.M."/>
            <person name="Pitt A.M."/>
            <person name="Adams D.R."/>
            <person name="Kolch W."/>
            <person name="Houslay M.D."/>
            <person name="Milligan G."/>
        </authorList>
    </citation>
    <scope>INTERACTION WITH ARRB2</scope>
</reference>
<reference key="39">
    <citation type="journal article" date="2008" name="Mol. Cancer Res.">
        <title>Distinct functions of natural ADAM-15 cytoplasmic domain variants in human mammary carcinoma.</title>
        <authorList>
            <person name="Zhong J.L."/>
            <person name="Poghosyan Z."/>
            <person name="Pennington C.J."/>
            <person name="Scott X."/>
            <person name="Handsley M.M."/>
            <person name="Warn A."/>
            <person name="Gavrilovic J."/>
            <person name="Honert K."/>
            <person name="Kruger A."/>
            <person name="Span P.N."/>
            <person name="Sweep F.C."/>
            <person name="Edwards D.R."/>
        </authorList>
    </citation>
    <scope>INTERACTION WITH ADAM15</scope>
</reference>
<reference key="40">
    <citation type="journal article" date="2008" name="Mol. Cell">
        <title>Kinase-selective enrichment enables quantitative phosphoproteomics of the kinome across the cell cycle.</title>
        <authorList>
            <person name="Daub H."/>
            <person name="Olsen J.V."/>
            <person name="Bairlein M."/>
            <person name="Gnad F."/>
            <person name="Oppermann F.S."/>
            <person name="Korner R."/>
            <person name="Greff Z."/>
            <person name="Keri G."/>
            <person name="Stemmann O."/>
            <person name="Mann M."/>
        </authorList>
    </citation>
    <scope>IDENTIFICATION BY MASS SPECTROMETRY [LARGE SCALE ANALYSIS]</scope>
    <source>
        <tissue>Cervix carcinoma</tissue>
    </source>
</reference>
<reference key="41">
    <citation type="journal article" date="2008" name="Mol. Cell">
        <title>Identification and characterization of a general nuclear translocation signal in signaling proteins.</title>
        <authorList>
            <person name="Chuderland D."/>
            <person name="Konson A."/>
            <person name="Seger R."/>
        </authorList>
    </citation>
    <scope>PHOSPHORYLATION AT SER-246 AND SER-248</scope>
    <scope>INTERACTION WITH IPO7</scope>
    <scope>SUBCELLULAR LOCATION</scope>
</reference>
<reference key="42">
    <citation type="journal article" date="2008" name="Mol. Cell. Biol.">
        <title>Extracellular signal-regulated kinase 2 (ERK2) phosphorylation sites and docking domain on the nuclear pore complex protein Tpr cooperatively regulate ERK2-Tpr interaction.</title>
        <authorList>
            <person name="Vomastek T."/>
            <person name="Iwanicki M.P."/>
            <person name="Burack W.R."/>
            <person name="Tiwari D."/>
            <person name="Kumar D."/>
            <person name="Parsons J.T."/>
            <person name="Weber M.J."/>
            <person name="Nandicoori V.K."/>
        </authorList>
    </citation>
    <scope>FUNCTION IN PHOSPHORYLATION OF TPR</scope>
    <scope>INTERACTION WITH TPR</scope>
    <scope>MUTAGENESIS OF LYS-54; 176-PRO--ASP-179; THR-185; TYR-187; LEU-234; ASP-318 AND ASP-321</scope>
</reference>
<reference key="43">
    <citation type="journal article" date="2008" name="Proc. Natl. Acad. Sci. U.S.A.">
        <title>A quantitative atlas of mitotic phosphorylation.</title>
        <authorList>
            <person name="Dephoure N."/>
            <person name="Zhou C."/>
            <person name="Villen J."/>
            <person name="Beausoleil S.A."/>
            <person name="Bakalarski C.E."/>
            <person name="Elledge S.J."/>
            <person name="Gygi S.P."/>
        </authorList>
    </citation>
    <scope>PHOSPHORYLATION [LARGE SCALE ANALYSIS] AT THR-185 AND TYR-187</scope>
    <scope>IDENTIFICATION BY MASS SPECTROMETRY [LARGE SCALE ANALYSIS]</scope>
    <source>
        <tissue>Cervix carcinoma</tissue>
    </source>
</reference>
<reference key="44">
    <citation type="journal article" date="2009" name="Anal. Chem.">
        <title>Lys-N and trypsin cover complementary parts of the phosphoproteome in a refined SCX-based approach.</title>
        <authorList>
            <person name="Gauci S."/>
            <person name="Helbig A.O."/>
            <person name="Slijper M."/>
            <person name="Krijgsveld J."/>
            <person name="Heck A.J."/>
            <person name="Mohammed S."/>
        </authorList>
    </citation>
    <scope>ACETYLATION [LARGE SCALE ANALYSIS] AT ALA-2</scope>
    <scope>CLEAVAGE OF INITIATOR METHIONINE [LARGE SCALE ANALYSIS]</scope>
    <scope>IDENTIFICATION BY MASS SPECTROMETRY [LARGE SCALE ANALYSIS]</scope>
</reference>
<reference key="45">
    <citation type="journal article" date="2009" name="Cell">
        <title>Profiling the human protein-DNA interactome reveals ERK2 as a transcriptional repressor of interferon signaling.</title>
        <authorList>
            <person name="Hu S."/>
            <person name="Xie Z."/>
            <person name="Onishi A."/>
            <person name="Yu X."/>
            <person name="Jiang L."/>
            <person name="Lin J."/>
            <person name="Rho H.-S."/>
            <person name="Woodard C."/>
            <person name="Wang H."/>
            <person name="Jeong J.-S."/>
            <person name="Long S."/>
            <person name="He X."/>
            <person name="Wade H."/>
            <person name="Blackshaw S."/>
            <person name="Qian J."/>
            <person name="Zhu H."/>
        </authorList>
    </citation>
    <scope>FUNCTION AS A TRANSCRIPTIONAL REPRESSOR</scope>
    <scope>DNA-BINDING</scope>
</reference>
<reference key="46">
    <citation type="journal article" date="2009" name="J. Biol. Chem.">
        <title>The D816V mutation of c-Kit circumvents a requirement for Src family kinases in c-Kit signal transduction.</title>
        <authorList>
            <person name="Sun J."/>
            <person name="Pedersen M."/>
            <person name="Ronnstrand L."/>
        </authorList>
    </citation>
    <scope>FUNCTION IN KIT SIGNALING PATHWAY</scope>
    <scope>PHOSPHORYLATION</scope>
</reference>
<reference key="47">
    <citation type="journal article" date="2009" name="J. Biol. Chem.">
        <title>Tumor suppressor density-enhanced phosphatase-1 (DEP-1) inhibits the RAS pathway by direct dephosphorylation of ERK1/2 kinases.</title>
        <authorList>
            <person name="Sacco F."/>
            <person name="Tinti M."/>
            <person name="Palma A."/>
            <person name="Ferrari E."/>
            <person name="Nardozza A.P."/>
            <person name="Hooft van Huijsduijnen R."/>
            <person name="Takahashi T."/>
            <person name="Castagnoli L."/>
            <person name="Cesareni G."/>
        </authorList>
    </citation>
    <scope>PHOSPHORYLATION AT TYR-187</scope>
    <scope>DEPHOSPHORYLATION AT TYR-187 BY PTPRJ</scope>
    <scope>MUTAGENESIS OF ASP-318</scope>
</reference>
<reference key="48">
    <citation type="journal article" date="2009" name="J. Hepatol.">
        <title>Protein kinase SGK1 enhances MEK/ERK complex formation through the phosphorylation of ERK2: implication for the positive regulatory role of SGK1 on the ERK function during liver regeneration.</title>
        <authorList>
            <person name="Won M."/>
            <person name="Park K.A."/>
            <person name="Byun H.S."/>
            <person name="Kim Y.R."/>
            <person name="Choi B.L."/>
            <person name="Hong J.H."/>
            <person name="Park J."/>
            <person name="Seok J.H."/>
            <person name="Lee Y.H."/>
            <person name="Cho C.H."/>
            <person name="Song I.S."/>
            <person name="Kim Y.K."/>
            <person name="Shen H.M."/>
            <person name="Hur G.M."/>
        </authorList>
    </citation>
    <scope>PHOSPHORYLATION AT SER-29 BY SGK1</scope>
    <scope>INTERACTION WITH SGK1</scope>
</reference>
<reference key="49">
    <citation type="journal article" date="2009" name="Mol. Cell. Proteomics">
        <title>Large-scale proteomics analysis of the human kinome.</title>
        <authorList>
            <person name="Oppermann F.S."/>
            <person name="Gnad F."/>
            <person name="Olsen J.V."/>
            <person name="Hornberger R."/>
            <person name="Greff Z."/>
            <person name="Keri G."/>
            <person name="Mann M."/>
            <person name="Daub H."/>
        </authorList>
    </citation>
    <scope>PHOSPHORYLATION [LARGE SCALE ANALYSIS] AT SER-284</scope>
    <scope>IDENTIFICATION BY MASS SPECTROMETRY [LARGE SCALE ANALYSIS]</scope>
</reference>
<reference key="50">
    <citation type="journal article" date="2009" name="Nat. Med.">
        <title>A new type of ERK1/2 autophosphorylation causes cardiac hypertrophy.</title>
        <authorList>
            <person name="Lorenz K."/>
            <person name="Schmitt J.P."/>
            <person name="Schmitteckert E.M."/>
            <person name="Lohse M.J."/>
        </authorList>
    </citation>
    <scope>PHOSPHORYLATION AT THR-190</scope>
    <scope>ACTIVITY REGULATION</scope>
    <scope>SUBUNIT</scope>
    <scope>SUBCELLULAR LOCATION</scope>
</reference>
<reference key="51">
    <citation type="journal article" date="2006" name="Growth Factors">
        <title>The extracellular signal-regulated kinase: multiple substrates regulate diverse cellular functions.</title>
        <authorList>
            <person name="Yoon S."/>
            <person name="Seger R."/>
        </authorList>
    </citation>
    <scope>REVIEW ON FUNCTION</scope>
</reference>
<reference key="52">
    <citation type="journal article" date="2009" name="BioFactors">
        <title>The ERK signaling cascade--views from different subcellular compartments.</title>
        <authorList>
            <person name="Yao Z."/>
            <person name="Seger R."/>
        </authorList>
    </citation>
    <scope>REVIEW ON FUNCTION</scope>
    <scope>REVIEW ON SUBCELLULAR LOCATION</scope>
</reference>
<reference key="53">
    <citation type="journal article" date="2009" name="Sci. Signal.">
        <title>Quantitative phosphoproteomic analysis of T cell receptor signaling reveals system-wide modulation of protein-protein interactions.</title>
        <authorList>
            <person name="Mayya V."/>
            <person name="Lundgren D.H."/>
            <person name="Hwang S.-I."/>
            <person name="Rezaul K."/>
            <person name="Wu L."/>
            <person name="Eng J.K."/>
            <person name="Rodionov V."/>
            <person name="Han D.K."/>
        </authorList>
    </citation>
    <scope>PHOSPHORYLATION [LARGE SCALE ANALYSIS] AT THR-185 AND TYR-187</scope>
    <scope>IDENTIFICATION BY MASS SPECTROMETRY [LARGE SCALE ANALYSIS]</scope>
    <source>
        <tissue>Leukemic T-cell</tissue>
    </source>
</reference>
<reference key="54">
    <citation type="journal article" date="2010" name="Sci. Signal.">
        <title>Quantitative phosphoproteomics reveals widespread full phosphorylation site occupancy during mitosis.</title>
        <authorList>
            <person name="Olsen J.V."/>
            <person name="Vermeulen M."/>
            <person name="Santamaria A."/>
            <person name="Kumar C."/>
            <person name="Miller M.L."/>
            <person name="Jensen L.J."/>
            <person name="Gnad F."/>
            <person name="Cox J."/>
            <person name="Jensen T.S."/>
            <person name="Nigg E.A."/>
            <person name="Brunak S."/>
            <person name="Mann M."/>
        </authorList>
    </citation>
    <scope>IDENTIFICATION BY MASS SPECTROMETRY [LARGE SCALE ANALYSIS]</scope>
    <source>
        <tissue>Cervix carcinoma</tissue>
    </source>
</reference>
<reference key="55">
    <citation type="journal article" date="2011" name="BMC Syst. Biol.">
        <title>Initial characterization of the human central proteome.</title>
        <authorList>
            <person name="Burkard T.R."/>
            <person name="Planyavsky M."/>
            <person name="Kaupe I."/>
            <person name="Breitwieser F.P."/>
            <person name="Buerckstuemmer T."/>
            <person name="Bennett K.L."/>
            <person name="Superti-Furga G."/>
            <person name="Colinge J."/>
        </authorList>
    </citation>
    <scope>IDENTIFICATION BY MASS SPECTROMETRY [LARGE SCALE ANALYSIS]</scope>
</reference>
<reference key="56">
    <citation type="journal article" date="2011" name="Genes Cancer">
        <title>The ERK cascade: distinct functions within various subcellular organelles.</title>
        <authorList>
            <person name="Wortzel I."/>
            <person name="Seger R."/>
        </authorList>
    </citation>
    <scope>REVIEW ON ACTIVITY REGULATION</scope>
    <scope>REVIEW ON FUNCTION</scope>
</reference>
<reference key="57">
    <citation type="journal article" date="2011" name="J. Biol. Chem.">
        <title>Mitogen-activated protein kinase extracellular signal-regulated kinase 2 phosphorylates and promotes Pin1 protein-dependent promyelocytic leukemia protein turnover.</title>
        <authorList>
            <person name="Lim J.H."/>
            <person name="Liu Y."/>
            <person name="Reineke E."/>
            <person name="Kao H.Y."/>
        </authorList>
    </citation>
    <scope>FUNCTION</scope>
    <scope>INTERACTION WITH PML</scope>
</reference>
<reference key="58">
    <citation type="journal article" date="2011" name="Sci. Signal.">
        <title>System-wide temporal characterization of the proteome and phosphoproteome of human embryonic stem cell differentiation.</title>
        <authorList>
            <person name="Rigbolt K.T."/>
            <person name="Prokhorova T.A."/>
            <person name="Akimov V."/>
            <person name="Henningsen J."/>
            <person name="Johansen P.T."/>
            <person name="Kratchmarova I."/>
            <person name="Kassem M."/>
            <person name="Mann M."/>
            <person name="Olsen J.V."/>
            <person name="Blagoev B."/>
        </authorList>
    </citation>
    <scope>PHOSPHORYLATION [LARGE SCALE ANALYSIS] AT THR-185 AND TYR-187</scope>
    <scope>IDENTIFICATION BY MASS SPECTROMETRY [LARGE SCALE ANALYSIS]</scope>
</reference>
<reference key="59">
    <citation type="journal article" date="2012" name="Mol. Cell. Proteomics">
        <title>Comparative large-scale characterisation of plant vs. mammal proteins reveals similar and idiosyncratic N-alpha acetylation features.</title>
        <authorList>
            <person name="Bienvenut W.V."/>
            <person name="Sumpton D."/>
            <person name="Martinez A."/>
            <person name="Lilla S."/>
            <person name="Espagne C."/>
            <person name="Meinnel T."/>
            <person name="Giglione C."/>
        </authorList>
    </citation>
    <scope>ACETYLATION [LARGE SCALE ANALYSIS] AT ALA-2</scope>
    <scope>CLEAVAGE OF INITIATOR METHIONINE [LARGE SCALE ANALYSIS]</scope>
    <scope>IDENTIFICATION BY MASS SPECTROMETRY [LARGE SCALE ANALYSIS]</scope>
</reference>
<reference key="60">
    <citation type="journal article" date="2012" name="Proc. Natl. Acad. Sci. U.S.A.">
        <title>N-terminal acetylome analyses and functional insights of the N-terminal acetyltransferase NatB.</title>
        <authorList>
            <person name="Van Damme P."/>
            <person name="Lasa M."/>
            <person name="Polevoda B."/>
            <person name="Gazquez C."/>
            <person name="Elosegui-Artola A."/>
            <person name="Kim D.S."/>
            <person name="De Juan-Pardo E."/>
            <person name="Demeyer K."/>
            <person name="Hole K."/>
            <person name="Larrea E."/>
            <person name="Timmerman E."/>
            <person name="Prieto J."/>
            <person name="Arnesen T."/>
            <person name="Sherman F."/>
            <person name="Gevaert K."/>
            <person name="Aldabe R."/>
        </authorList>
    </citation>
    <scope>ACETYLATION [LARGE SCALE ANALYSIS] AT ALA-2</scope>
    <scope>CLEAVAGE OF INITIATOR METHIONINE [LARGE SCALE ANALYSIS]</scope>
    <scope>IDENTIFICATION BY MASS SPECTROMETRY [LARGE SCALE ANALYSIS]</scope>
</reference>
<reference key="61">
    <citation type="journal article" date="2013" name="J. Proteome Res.">
        <title>Toward a comprehensive characterization of a human cancer cell phosphoproteome.</title>
        <authorList>
            <person name="Zhou H."/>
            <person name="Di Palma S."/>
            <person name="Preisinger C."/>
            <person name="Peng M."/>
            <person name="Polat A.N."/>
            <person name="Heck A.J."/>
            <person name="Mohammed S."/>
        </authorList>
    </citation>
    <scope>PHOSPHORYLATION [LARGE SCALE ANALYSIS] AT THR-185 AND TYR-187</scope>
    <scope>IDENTIFICATION BY MASS SPECTROMETRY [LARGE SCALE ANALYSIS]</scope>
    <source>
        <tissue>Cervix carcinoma</tissue>
        <tissue>Erythroleukemia</tissue>
    </source>
</reference>
<reference key="62">
    <citation type="journal article" date="2013" name="Proc. Natl. Acad. Sci. U.S.A.">
        <title>Pseudophosphatase STYX modulates cell-fate decisions and cell migration by spatiotemporal regulation of ERK1/2.</title>
        <authorList>
            <person name="Reiterer V."/>
            <person name="Fey D."/>
            <person name="Kolch W."/>
            <person name="Kholodenko B.N."/>
            <person name="Farhan H."/>
        </authorList>
    </citation>
    <scope>INTERACTION WITH STYX</scope>
</reference>
<reference key="63">
    <citation type="journal article" date="2014" name="J. Proteomics">
        <title>An enzyme assisted RP-RPLC approach for in-depth analysis of human liver phosphoproteome.</title>
        <authorList>
            <person name="Bian Y."/>
            <person name="Song C."/>
            <person name="Cheng K."/>
            <person name="Dong M."/>
            <person name="Wang F."/>
            <person name="Huang J."/>
            <person name="Sun D."/>
            <person name="Wang L."/>
            <person name="Ye M."/>
            <person name="Zou H."/>
        </authorList>
    </citation>
    <scope>IDENTIFICATION BY MASS SPECTROMETRY [LARGE SCALE ANALYSIS]</scope>
    <source>
        <tissue>Liver</tissue>
    </source>
</reference>
<reference key="64">
    <citation type="journal article" date="2016" name="Mol. Cell">
        <title>Mitochondria-Translocated PGK1 Functions as a Protein Kinase to Coordinate Glycolysis and the TCA Cycle in Tumorigenesis.</title>
        <authorList>
            <person name="Li X."/>
            <person name="Jiang Y."/>
            <person name="Meisenhelder J."/>
            <person name="Yang W."/>
            <person name="Hawke D.H."/>
            <person name="Zheng Y."/>
            <person name="Xia Y."/>
            <person name="Aldape K."/>
            <person name="He J."/>
            <person name="Hunter T."/>
            <person name="Wang L."/>
            <person name="Lu Z."/>
        </authorList>
    </citation>
    <scope>FUNCTION</scope>
    <scope>CATALYTIC ACTIVITY</scope>
    <scope>INTERACTION WITH PGK1</scope>
</reference>
<reference key="65">
    <citation type="journal article" date="2020" name="Oncogene">
        <title>The EGFR-ZNF263 signaling axis silences SIX3 in glioblastoma epigenetically.</title>
        <authorList>
            <person name="Yu Z."/>
            <person name="Feng J."/>
            <person name="Wang W."/>
            <person name="Deng Z."/>
            <person name="Zhang Y."/>
            <person name="Xiao L."/>
            <person name="Wang Z."/>
            <person name="Liu C."/>
            <person name="Liu Q."/>
            <person name="Chen S."/>
            <person name="Wu M."/>
        </authorList>
    </citation>
    <scope>INTERACTION WITH ZNF263</scope>
</reference>
<reference key="66">
    <citation type="journal article" date="2021" name="Nat. Cell Biol.">
        <title>TRIM15 and CYLD regulate ERK activation via lysine-63-linked polyubiquitination.</title>
        <authorList>
            <person name="Zhu G."/>
            <person name="Herlyn M."/>
            <person name="Yang X."/>
        </authorList>
    </citation>
    <scope>FUNCTION</scope>
    <scope>UBIQUITINATION BY TRIM15</scope>
    <scope>DEUBIQITINATION BY CYLD</scope>
</reference>
<reference evidence="64" key="67">
    <citation type="journal article" date="1998" name="Protein Sci.">
        <title>A single amino acid substitution makes ERK2 susceptible to pyridinyl imidazole inhibitors of p38 MAP kinase.</title>
        <authorList>
            <person name="Fox T."/>
            <person name="Coll J.T."/>
            <person name="Xie X."/>
            <person name="Ford P.J."/>
            <person name="Germann U.A."/>
            <person name="Porter M.D."/>
            <person name="Pazhanisamy S."/>
            <person name="Fleming M.A."/>
            <person name="Galullo V."/>
            <person name="Su M.S."/>
            <person name="Wilson K.P."/>
        </authorList>
    </citation>
    <scope>X-RAY CRYSTALLOGRAPHY (2.00 ANGSTROMS) IN COMPLEX WITH INHIBITOR</scope>
</reference>
<reference evidence="65" key="68">
    <citation type="journal article" date="2005" name="Biochem. Biophys. Res. Commun.">
        <title>Identification of a selective ERK inhibitor and structural determination of the inhibitor-ERK2 complex.</title>
        <authorList>
            <person name="Ohori M."/>
            <person name="Kinoshita T."/>
            <person name="Okubo M."/>
            <person name="Sato K."/>
            <person name="Yamazaki A."/>
            <person name="Arakawa H."/>
            <person name="Nishimura S."/>
            <person name="Inamura N."/>
            <person name="Nakajima H."/>
            <person name="Neya M."/>
            <person name="Miyake H."/>
            <person name="Fujii T."/>
        </authorList>
    </citation>
    <scope>X-RAY CRYSTALLOGRAPHY (2.50 ANGSTROMS) IN COMPLEX WITH INHIBITOR</scope>
</reference>
<reference evidence="66" key="69">
    <citation type="journal article" date="2006" name="Bioorg. Med. Chem. Lett.">
        <title>Crystal structure of human ERK2 complexed with a pyrazolo[3,4-c]pyridazine derivative.</title>
        <authorList>
            <person name="Kinoshita T."/>
            <person name="Warizaya M."/>
            <person name="Ohori M."/>
            <person name="Sato K."/>
            <person name="Neya M."/>
            <person name="Fujii T."/>
        </authorList>
    </citation>
    <scope>X-RAY CRYSTALLOGRAPHY (2.50 ANGSTROMS) IN COMPLEX WITH INHIBITOR</scope>
</reference>
<reference evidence="74" key="70">
    <citation type="journal article" date="2007" name="Biochem. Biophys. Res. Commun.">
        <title>Role of a cysteine residue in the active site of ERK and the MAPKK family.</title>
        <authorList>
            <person name="Ohori M."/>
            <person name="Kinoshita T."/>
            <person name="Yoshimura S."/>
            <person name="Warizaya M."/>
            <person name="Nakajima H."/>
            <person name="Miyake H."/>
        </authorList>
    </citation>
    <scope>X-RAY CRYSTALLOGRAPHY (3.00 ANGSTROMS) IN COMPLEX WITH INHIBITOR</scope>
</reference>
<reference evidence="67 68 69" key="71">
    <citation type="journal article" date="2007" name="J. Med. Chem.">
        <title>Flipped out: structure-guided design of selective pyrazolylpyrrole ERK inhibitors.</title>
        <authorList>
            <person name="Aronov A.M."/>
            <person name="Baker C."/>
            <person name="Bemis G.W."/>
            <person name="Cao J."/>
            <person name="Chen G."/>
            <person name="Ford P.J."/>
            <person name="Germann U.A."/>
            <person name="Green J."/>
            <person name="Hale M.R."/>
            <person name="Jacobs M."/>
            <person name="Janetka J.W."/>
            <person name="Maltais F."/>
            <person name="Martinez-Botella G."/>
            <person name="Namchuk M.N."/>
            <person name="Straub J."/>
            <person name="Tang Q."/>
            <person name="Xie X."/>
        </authorList>
    </citation>
    <scope>X-RAY CRYSTALLOGRAPHY (2.00 ANGSTROMS) OF 2-359 IN COMPLEX WITH INHIBITOR</scope>
</reference>
<reference evidence="70 71" key="72">
    <citation type="journal article" date="2008" name="Biochemistry">
        <title>Structural basis of substrate recognition by hematopoietic tyrosine phosphatase.</title>
        <authorList>
            <person name="Critton D.A."/>
            <person name="Tortajada A."/>
            <person name="Stetson G."/>
            <person name="Peti W."/>
            <person name="Page R."/>
        </authorList>
    </citation>
    <scope>X-RAY CRYSTALLOGRAPHY (1.90 ANGSTROMS) OF 186-191</scope>
    <scope>PHOSPHORYLATION AT TYR-187</scope>
</reference>
<reference evidence="72 73" key="73">
    <citation type="journal article" date="2009" name="J. Med. Chem.">
        <title>Structure-guided design of potent and selective pyrimidylpyrrole inhibitors of extracellular signal-regulated kinase (ERK) using conformational control.</title>
        <authorList>
            <person name="Aronov A.M."/>
            <person name="Tang Q."/>
            <person name="Martinez-Botella G."/>
            <person name="Bemis G.W."/>
            <person name="Cao J."/>
            <person name="Chen G."/>
            <person name="Ewing N.P."/>
            <person name="Ford P.J."/>
            <person name="Germann U.A."/>
            <person name="Green J."/>
            <person name="Hale M.R."/>
            <person name="Jacobs M."/>
            <person name="Janetka J.W."/>
            <person name="Maltais F."/>
            <person name="Markland W."/>
            <person name="Namchuk M.N."/>
            <person name="Nanthakumar S."/>
            <person name="Poondru S."/>
            <person name="Straub J."/>
            <person name="ter Haar E."/>
            <person name="Xie X."/>
        </authorList>
    </citation>
    <scope>X-RAY CRYSTALLOGRAPHY (2.20 ANGSTROMS) IN COMPLEX WITH INHIBITOR</scope>
</reference>
<reference key="74">
    <citation type="journal article" date="2020" name="Am. J. Hum. Genet.">
        <title>Enhanced MAPK1 function causes a neurodevelopmental disorder within the RASopathy clinical spectrum.</title>
        <authorList>
            <person name="Motta M."/>
            <person name="Pannone L."/>
            <person name="Pantaleoni F."/>
            <person name="Bocchinfuso G."/>
            <person name="Radio F.C."/>
            <person name="Cecchetti S."/>
            <person name="Ciolfi A."/>
            <person name="Di Rocco M."/>
            <person name="Elting M.W."/>
            <person name="Brilstra E.H."/>
            <person name="Boni S."/>
            <person name="Mazzanti L."/>
            <person name="Tamburrino F."/>
            <person name="Walsh L."/>
            <person name="Payne K."/>
            <person name="Fernandez-Jaen A."/>
            <person name="Ganapathi M."/>
            <person name="Chung W.K."/>
            <person name="Grange D.K."/>
            <person name="Dave-Wala A."/>
            <person name="Reshmi S.C."/>
            <person name="Bartholomew D.W."/>
            <person name="Mouhlas D."/>
            <person name="Carpentieri G."/>
            <person name="Bruselles A."/>
            <person name="Pizzi S."/>
            <person name="Bellacchio E."/>
            <person name="Piceci-Sparascio F."/>
            <person name="Lissewski C."/>
            <person name="Brinkmann J."/>
            <person name="Waclaw R.R."/>
            <person name="Waisfisz Q."/>
            <person name="van Gassen K."/>
            <person name="Wentzensen I.M."/>
            <person name="Morrow M.M."/>
            <person name="Alvarez S."/>
            <person name="Martinez-Garcia M."/>
            <person name="De Luca A."/>
            <person name="Memo L."/>
            <person name="Zampino G."/>
            <person name="Rossi C."/>
            <person name="Seri M."/>
            <person name="Gelb B.D."/>
            <person name="Zenker M."/>
            <person name="Dallapiccola B."/>
            <person name="Stella L."/>
            <person name="Prada C.E."/>
            <person name="Martinelli S."/>
            <person name="Flex E."/>
            <person name="Tartaglia M."/>
        </authorList>
    </citation>
    <scope>VARIANTS NS13 ASN-74; TYR-80; VAL-174; ASN-318; GLY-318; GLN-322 AND ARG-323</scope>
    <scope>INVOLVEMENT IN NS13</scope>
    <scope>CHARACTERIZATION OF VARIANTS NS13 ASN-74; TYR-80; VAL-174; ASN-318; GLY-318 AND ARG-323</scope>
    <scope>SUBCELLULAR LOCATION</scope>
    <scope>FUNCTION</scope>
    <scope>INTERACTION WITH MAP2K1 AND DUSP6</scope>
</reference>
<protein>
    <recommendedName>
        <fullName evidence="62">Mitogen-activated protein kinase 1</fullName>
        <shortName>MAP kinase 1</shortName>
        <shortName>MAPK 1</shortName>
        <ecNumber evidence="44">2.7.11.24</ecNumber>
    </recommendedName>
    <alternativeName>
        <fullName>ERT1</fullName>
    </alternativeName>
    <alternativeName>
        <fullName>Extracellular signal-regulated kinase 2</fullName>
        <shortName>ERK-2</shortName>
    </alternativeName>
    <alternativeName>
        <fullName>MAP kinase isoform p42</fullName>
        <shortName>p42-MAPK</shortName>
    </alternativeName>
    <alternativeName>
        <fullName>Mitogen-activated protein kinase 2</fullName>
        <shortName>MAP kinase 2</shortName>
        <shortName>MAPK 2</shortName>
    </alternativeName>
</protein>
<dbReference type="EC" id="2.7.11.24" evidence="44"/>
<dbReference type="EMBL" id="M84489">
    <property type="protein sequence ID" value="AAA58459.1"/>
    <property type="molecule type" value="mRNA"/>
</dbReference>
<dbReference type="EMBL" id="Z11694">
    <property type="protein sequence ID" value="CAA77752.1"/>
    <property type="molecule type" value="mRNA"/>
</dbReference>
<dbReference type="EMBL" id="Z11695">
    <property type="protein sequence ID" value="CAA77753.1"/>
    <property type="status" value="ALT_INIT"/>
    <property type="molecule type" value="mRNA"/>
</dbReference>
<dbReference type="EMBL" id="DQ399292">
    <property type="protein sequence ID" value="ABD60303.1"/>
    <property type="molecule type" value="mRNA"/>
</dbReference>
<dbReference type="EMBL" id="AP000553">
    <property type="status" value="NOT_ANNOTATED_CDS"/>
    <property type="molecule type" value="Genomic_DNA"/>
</dbReference>
<dbReference type="EMBL" id="AP000554">
    <property type="status" value="NOT_ANNOTATED_CDS"/>
    <property type="molecule type" value="Genomic_DNA"/>
</dbReference>
<dbReference type="EMBL" id="AP000555">
    <property type="status" value="NOT_ANNOTATED_CDS"/>
    <property type="molecule type" value="Genomic_DNA"/>
</dbReference>
<dbReference type="EMBL" id="BC017832">
    <property type="protein sequence ID" value="AAH17832.1"/>
    <property type="molecule type" value="mRNA"/>
</dbReference>
<dbReference type="CCDS" id="CCDS13795.1">
    <molecule id="P28482-1"/>
</dbReference>
<dbReference type="PIR" id="JQ1400">
    <property type="entry name" value="JQ1400"/>
</dbReference>
<dbReference type="RefSeq" id="NP_002736.3">
    <molecule id="P28482-1"/>
    <property type="nucleotide sequence ID" value="NM_002745.4"/>
</dbReference>
<dbReference type="RefSeq" id="NP_620407.1">
    <molecule id="P28482-1"/>
    <property type="nucleotide sequence ID" value="NM_138957.3"/>
</dbReference>
<dbReference type="PDB" id="1PME">
    <property type="method" value="X-ray"/>
    <property type="resolution" value="2.00 A"/>
    <property type="chains" value="A=1-360"/>
</dbReference>
<dbReference type="PDB" id="1TVO">
    <property type="method" value="X-ray"/>
    <property type="resolution" value="2.50 A"/>
    <property type="chains" value="A=1-360"/>
</dbReference>
<dbReference type="PDB" id="1WZY">
    <property type="method" value="X-ray"/>
    <property type="resolution" value="2.50 A"/>
    <property type="chains" value="A=1-360"/>
</dbReference>
<dbReference type="PDB" id="2OJG">
    <property type="method" value="X-ray"/>
    <property type="resolution" value="2.00 A"/>
    <property type="chains" value="A=2-360"/>
</dbReference>
<dbReference type="PDB" id="2OJI">
    <property type="method" value="X-ray"/>
    <property type="resolution" value="2.60 A"/>
    <property type="chains" value="A=2-360"/>
</dbReference>
<dbReference type="PDB" id="2OJJ">
    <property type="method" value="X-ray"/>
    <property type="resolution" value="2.40 A"/>
    <property type="chains" value="A=2-360"/>
</dbReference>
<dbReference type="PDB" id="2Y9Q">
    <property type="method" value="X-ray"/>
    <property type="resolution" value="1.55 A"/>
    <property type="chains" value="A=1-360"/>
</dbReference>
<dbReference type="PDB" id="3D42">
    <property type="method" value="X-ray"/>
    <property type="resolution" value="2.46 A"/>
    <property type="chains" value="B=184-191"/>
</dbReference>
<dbReference type="PDB" id="3D44">
    <property type="method" value="X-ray"/>
    <property type="resolution" value="1.90 A"/>
    <property type="chains" value="B=184-191"/>
</dbReference>
<dbReference type="PDB" id="3I5Z">
    <property type="method" value="X-ray"/>
    <property type="resolution" value="2.20 A"/>
    <property type="chains" value="A=1-360"/>
</dbReference>
<dbReference type="PDB" id="3I60">
    <property type="method" value="X-ray"/>
    <property type="resolution" value="2.50 A"/>
    <property type="chains" value="A=1-360"/>
</dbReference>
<dbReference type="PDB" id="3SA0">
    <property type="method" value="X-ray"/>
    <property type="resolution" value="1.59 A"/>
    <property type="chains" value="A=1-360"/>
</dbReference>
<dbReference type="PDB" id="3TEI">
    <property type="method" value="X-ray"/>
    <property type="resolution" value="2.40 A"/>
    <property type="chains" value="A=1-360"/>
</dbReference>
<dbReference type="PDB" id="3W55">
    <property type="method" value="X-ray"/>
    <property type="resolution" value="3.00 A"/>
    <property type="chains" value="A=1-360"/>
</dbReference>
<dbReference type="PDB" id="4FMQ">
    <property type="method" value="X-ray"/>
    <property type="resolution" value="2.10 A"/>
    <property type="chains" value="A=1-360"/>
</dbReference>
<dbReference type="PDB" id="4FUX">
    <property type="method" value="X-ray"/>
    <property type="resolution" value="2.20 A"/>
    <property type="chains" value="A=1-360"/>
</dbReference>
<dbReference type="PDB" id="4FUY">
    <property type="method" value="X-ray"/>
    <property type="resolution" value="2.00 A"/>
    <property type="chains" value="A=1-360"/>
</dbReference>
<dbReference type="PDB" id="4FV0">
    <property type="method" value="X-ray"/>
    <property type="resolution" value="2.10 A"/>
    <property type="chains" value="A=1-360"/>
</dbReference>
<dbReference type="PDB" id="4FV1">
    <property type="method" value="X-ray"/>
    <property type="resolution" value="1.99 A"/>
    <property type="chains" value="A=1-360"/>
</dbReference>
<dbReference type="PDB" id="4FV2">
    <property type="method" value="X-ray"/>
    <property type="resolution" value="2.00 A"/>
    <property type="chains" value="A=1-360"/>
</dbReference>
<dbReference type="PDB" id="4FV3">
    <property type="method" value="X-ray"/>
    <property type="resolution" value="2.20 A"/>
    <property type="chains" value="A=1-360"/>
</dbReference>
<dbReference type="PDB" id="4FV4">
    <property type="method" value="X-ray"/>
    <property type="resolution" value="2.50 A"/>
    <property type="chains" value="A=1-360"/>
</dbReference>
<dbReference type="PDB" id="4FV5">
    <property type="method" value="X-ray"/>
    <property type="resolution" value="2.40 A"/>
    <property type="chains" value="A=1-360"/>
</dbReference>
<dbReference type="PDB" id="4FV6">
    <property type="method" value="X-ray"/>
    <property type="resolution" value="2.50 A"/>
    <property type="chains" value="A=1-360"/>
</dbReference>
<dbReference type="PDB" id="4FV7">
    <property type="method" value="X-ray"/>
    <property type="resolution" value="1.90 A"/>
    <property type="chains" value="A=1-360"/>
</dbReference>
<dbReference type="PDB" id="4FV8">
    <property type="method" value="X-ray"/>
    <property type="resolution" value="2.00 A"/>
    <property type="chains" value="A=1-360"/>
</dbReference>
<dbReference type="PDB" id="4FV9">
    <property type="method" value="X-ray"/>
    <property type="resolution" value="2.11 A"/>
    <property type="chains" value="A=1-360"/>
</dbReference>
<dbReference type="PDB" id="4G6N">
    <property type="method" value="X-ray"/>
    <property type="resolution" value="2.00 A"/>
    <property type="chains" value="A=1-360"/>
</dbReference>
<dbReference type="PDB" id="4G6O">
    <property type="method" value="X-ray"/>
    <property type="resolution" value="2.20 A"/>
    <property type="chains" value="A=1-360"/>
</dbReference>
<dbReference type="PDB" id="4H3P">
    <property type="method" value="X-ray"/>
    <property type="resolution" value="2.30 A"/>
    <property type="chains" value="A/D=1-360"/>
</dbReference>
<dbReference type="PDB" id="4H3Q">
    <property type="method" value="X-ray"/>
    <property type="resolution" value="2.20 A"/>
    <property type="chains" value="A=1-360"/>
</dbReference>
<dbReference type="PDB" id="4IZ5">
    <property type="method" value="X-ray"/>
    <property type="resolution" value="3.19 A"/>
    <property type="chains" value="A/B/C/D=8-360"/>
</dbReference>
<dbReference type="PDB" id="4IZ7">
    <property type="method" value="X-ray"/>
    <property type="resolution" value="1.80 A"/>
    <property type="chains" value="A/C=8-360"/>
</dbReference>
<dbReference type="PDB" id="4IZA">
    <property type="method" value="X-ray"/>
    <property type="resolution" value="1.93 A"/>
    <property type="chains" value="A/C=8-360"/>
</dbReference>
<dbReference type="PDB" id="4N0S">
    <property type="method" value="X-ray"/>
    <property type="resolution" value="1.80 A"/>
    <property type="chains" value="A=1-360"/>
</dbReference>
<dbReference type="PDB" id="4NIF">
    <property type="method" value="X-ray"/>
    <property type="resolution" value="2.15 A"/>
    <property type="chains" value="B/E=1-360"/>
</dbReference>
<dbReference type="PDB" id="4O6E">
    <property type="method" value="X-ray"/>
    <property type="resolution" value="1.95 A"/>
    <property type="chains" value="A=13-360"/>
</dbReference>
<dbReference type="PDB" id="4QP1">
    <property type="method" value="X-ray"/>
    <property type="resolution" value="2.70 A"/>
    <property type="chains" value="A/B=1-360"/>
</dbReference>
<dbReference type="PDB" id="4QP2">
    <property type="method" value="X-ray"/>
    <property type="resolution" value="2.23 A"/>
    <property type="chains" value="A/B=1-360"/>
</dbReference>
<dbReference type="PDB" id="4QP3">
    <property type="method" value="X-ray"/>
    <property type="resolution" value="2.60 A"/>
    <property type="chains" value="A/B=1-360"/>
</dbReference>
<dbReference type="PDB" id="4QP4">
    <property type="method" value="X-ray"/>
    <property type="resolution" value="2.20 A"/>
    <property type="chains" value="A/B=1-360"/>
</dbReference>
<dbReference type="PDB" id="4QP6">
    <property type="method" value="X-ray"/>
    <property type="resolution" value="3.10 A"/>
    <property type="chains" value="A/B=1-360"/>
</dbReference>
<dbReference type="PDB" id="4QP7">
    <property type="method" value="X-ray"/>
    <property type="resolution" value="2.25 A"/>
    <property type="chains" value="A/B=1-360"/>
</dbReference>
<dbReference type="PDB" id="4QP8">
    <property type="method" value="X-ray"/>
    <property type="resolution" value="2.45 A"/>
    <property type="chains" value="A/B=1-360"/>
</dbReference>
<dbReference type="PDB" id="4QP9">
    <property type="method" value="X-ray"/>
    <property type="resolution" value="2.00 A"/>
    <property type="chains" value="A=1-360"/>
</dbReference>
<dbReference type="PDB" id="4QPA">
    <property type="method" value="X-ray"/>
    <property type="resolution" value="2.85 A"/>
    <property type="chains" value="A/B=1-360"/>
</dbReference>
<dbReference type="PDB" id="4QTA">
    <property type="method" value="X-ray"/>
    <property type="resolution" value="1.45 A"/>
    <property type="chains" value="A=1-360"/>
</dbReference>
<dbReference type="PDB" id="4QTE">
    <property type="method" value="X-ray"/>
    <property type="resolution" value="1.50 A"/>
    <property type="chains" value="A=1-360"/>
</dbReference>
<dbReference type="PDB" id="4XJ0">
    <property type="method" value="X-ray"/>
    <property type="resolution" value="2.58 A"/>
    <property type="chains" value="A/B=12-360"/>
</dbReference>
<dbReference type="PDB" id="4ZXT">
    <property type="method" value="X-ray"/>
    <property type="resolution" value="2.00 A"/>
    <property type="chains" value="A=1-360"/>
</dbReference>
<dbReference type="PDB" id="4ZZM">
    <property type="method" value="X-ray"/>
    <property type="resolution" value="1.89 A"/>
    <property type="chains" value="A=11-360"/>
</dbReference>
<dbReference type="PDB" id="4ZZN">
    <property type="method" value="X-ray"/>
    <property type="resolution" value="1.33 A"/>
    <property type="chains" value="A=11-360"/>
</dbReference>
<dbReference type="PDB" id="4ZZO">
    <property type="method" value="X-ray"/>
    <property type="resolution" value="1.63 A"/>
    <property type="chains" value="A=11-360"/>
</dbReference>
<dbReference type="PDB" id="5AX3">
    <property type="method" value="X-ray"/>
    <property type="resolution" value="2.98 A"/>
    <property type="chains" value="A=1-360"/>
</dbReference>
<dbReference type="PDB" id="5BUE">
    <property type="method" value="X-ray"/>
    <property type="resolution" value="2.40 A"/>
    <property type="chains" value="A=2-360"/>
</dbReference>
<dbReference type="PDB" id="5BUI">
    <property type="method" value="X-ray"/>
    <property type="resolution" value="2.12 A"/>
    <property type="chains" value="A=2-360"/>
</dbReference>
<dbReference type="PDB" id="5BUJ">
    <property type="method" value="X-ray"/>
    <property type="resolution" value="1.85 A"/>
    <property type="chains" value="A=2-360"/>
</dbReference>
<dbReference type="PDB" id="5BVD">
    <property type="method" value="X-ray"/>
    <property type="resolution" value="1.90 A"/>
    <property type="chains" value="A=2-360"/>
</dbReference>
<dbReference type="PDB" id="5BVE">
    <property type="method" value="X-ray"/>
    <property type="resolution" value="2.00 A"/>
    <property type="chains" value="A=2-360"/>
</dbReference>
<dbReference type="PDB" id="5BVF">
    <property type="method" value="X-ray"/>
    <property type="resolution" value="1.90 A"/>
    <property type="chains" value="A=2-360"/>
</dbReference>
<dbReference type="PDB" id="5K4I">
    <property type="method" value="X-ray"/>
    <property type="resolution" value="1.76 A"/>
    <property type="chains" value="A=9-360"/>
</dbReference>
<dbReference type="PDB" id="5LCJ">
    <property type="method" value="X-ray"/>
    <property type="resolution" value="1.78 A"/>
    <property type="chains" value="A=1-360"/>
</dbReference>
<dbReference type="PDB" id="5LCK">
    <property type="method" value="X-ray"/>
    <property type="resolution" value="1.89 A"/>
    <property type="chains" value="A=1-360"/>
</dbReference>
<dbReference type="PDB" id="5NGU">
    <property type="method" value="X-ray"/>
    <property type="resolution" value="2.74 A"/>
    <property type="chains" value="A=1-360"/>
</dbReference>
<dbReference type="PDB" id="5NHF">
    <property type="method" value="X-ray"/>
    <property type="resolution" value="2.14 A"/>
    <property type="chains" value="A=1-360"/>
</dbReference>
<dbReference type="PDB" id="5NHH">
    <property type="method" value="X-ray"/>
    <property type="resolution" value="1.94 A"/>
    <property type="chains" value="A=1-360"/>
</dbReference>
<dbReference type="PDB" id="5NHJ">
    <property type="method" value="X-ray"/>
    <property type="resolution" value="2.12 A"/>
    <property type="chains" value="A=1-360"/>
</dbReference>
<dbReference type="PDB" id="5NHL">
    <property type="method" value="X-ray"/>
    <property type="resolution" value="2.07 A"/>
    <property type="chains" value="A=1-360"/>
</dbReference>
<dbReference type="PDB" id="5NHO">
    <property type="method" value="X-ray"/>
    <property type="resolution" value="2.24 A"/>
    <property type="chains" value="A=1-360"/>
</dbReference>
<dbReference type="PDB" id="5NHP">
    <property type="method" value="X-ray"/>
    <property type="resolution" value="1.99 A"/>
    <property type="chains" value="A=1-360"/>
</dbReference>
<dbReference type="PDB" id="5NHV">
    <property type="method" value="X-ray"/>
    <property type="resolution" value="2.00 A"/>
    <property type="chains" value="A=1-360"/>
</dbReference>
<dbReference type="PDB" id="5V60">
    <property type="method" value="X-ray"/>
    <property type="resolution" value="2.18 A"/>
    <property type="chains" value="A=8-360"/>
</dbReference>
<dbReference type="PDB" id="5V61">
    <property type="method" value="X-ray"/>
    <property type="resolution" value="2.20 A"/>
    <property type="chains" value="A=8-360"/>
</dbReference>
<dbReference type="PDB" id="5V62">
    <property type="method" value="X-ray"/>
    <property type="resolution" value="1.90 A"/>
    <property type="chains" value="A=10-360"/>
</dbReference>
<dbReference type="PDB" id="5WP1">
    <property type="method" value="X-ray"/>
    <property type="resolution" value="1.40 A"/>
    <property type="chains" value="A=4-360"/>
</dbReference>
<dbReference type="PDB" id="6D5Y">
    <property type="method" value="X-ray"/>
    <property type="resolution" value="2.86 A"/>
    <property type="chains" value="A=13-360"/>
</dbReference>
<dbReference type="PDB" id="6DMG">
    <property type="method" value="X-ray"/>
    <property type="resolution" value="2.20 A"/>
    <property type="chains" value="A=11-357"/>
</dbReference>
<dbReference type="PDB" id="6G54">
    <property type="method" value="X-ray"/>
    <property type="resolution" value="2.05 A"/>
    <property type="chains" value="A=1-360"/>
</dbReference>
<dbReference type="PDB" id="6G8X">
    <property type="method" value="X-ray"/>
    <property type="resolution" value="1.76 A"/>
    <property type="chains" value="A=1-360"/>
</dbReference>
<dbReference type="PDB" id="6G91">
    <property type="method" value="X-ray"/>
    <property type="resolution" value="1.80 A"/>
    <property type="chains" value="A=1-360"/>
</dbReference>
<dbReference type="PDB" id="6G92">
    <property type="method" value="X-ray"/>
    <property type="resolution" value="1.99 A"/>
    <property type="chains" value="A=1-360"/>
</dbReference>
<dbReference type="PDB" id="6G93">
    <property type="method" value="X-ray"/>
    <property type="resolution" value="1.67 A"/>
    <property type="chains" value="A=1-360"/>
</dbReference>
<dbReference type="PDB" id="6G97">
    <property type="method" value="X-ray"/>
    <property type="resolution" value="1.90 A"/>
    <property type="chains" value="A=1-360"/>
</dbReference>
<dbReference type="PDB" id="6G9A">
    <property type="method" value="X-ray"/>
    <property type="resolution" value="1.91 A"/>
    <property type="chains" value="A=1-360"/>
</dbReference>
<dbReference type="PDB" id="6G9D">
    <property type="method" value="X-ray"/>
    <property type="resolution" value="1.80 A"/>
    <property type="chains" value="A=1-360"/>
</dbReference>
<dbReference type="PDB" id="6G9H">
    <property type="method" value="X-ray"/>
    <property type="resolution" value="1.73 A"/>
    <property type="chains" value="A=1-360"/>
</dbReference>
<dbReference type="PDB" id="6G9J">
    <property type="method" value="X-ray"/>
    <property type="resolution" value="1.98 A"/>
    <property type="chains" value="A=1-360"/>
</dbReference>
<dbReference type="PDB" id="6G9K">
    <property type="method" value="X-ray"/>
    <property type="resolution" value="1.94 A"/>
    <property type="chains" value="A=1-360"/>
</dbReference>
<dbReference type="PDB" id="6G9M">
    <property type="method" value="X-ray"/>
    <property type="resolution" value="1.86 A"/>
    <property type="chains" value="A=1-360"/>
</dbReference>
<dbReference type="PDB" id="6G9N">
    <property type="method" value="X-ray"/>
    <property type="resolution" value="1.76 A"/>
    <property type="chains" value="A=1-360"/>
</dbReference>
<dbReference type="PDB" id="6GDM">
    <property type="method" value="X-ray"/>
    <property type="resolution" value="1.91 A"/>
    <property type="chains" value="A=1-360"/>
</dbReference>
<dbReference type="PDB" id="6GDQ">
    <property type="method" value="X-ray"/>
    <property type="resolution" value="1.86 A"/>
    <property type="chains" value="A=1-360"/>
</dbReference>
<dbReference type="PDB" id="6GE0">
    <property type="method" value="X-ray"/>
    <property type="resolution" value="1.82 A"/>
    <property type="chains" value="A=1-360"/>
</dbReference>
<dbReference type="PDB" id="6GJB">
    <property type="method" value="X-ray"/>
    <property type="resolution" value="1.82 A"/>
    <property type="chains" value="A=1-360"/>
</dbReference>
<dbReference type="PDB" id="6GJD">
    <property type="method" value="X-ray"/>
    <property type="resolution" value="1.58 A"/>
    <property type="chains" value="A=1-360"/>
</dbReference>
<dbReference type="PDB" id="6NBS">
    <property type="method" value="X-ray"/>
    <property type="resolution" value="1.90 A"/>
    <property type="chains" value="A=9-360"/>
</dbReference>
<dbReference type="PDB" id="6OPG">
    <property type="method" value="X-ray"/>
    <property type="resolution" value="2.90 A"/>
    <property type="chains" value="A=8-360"/>
</dbReference>
<dbReference type="PDB" id="6OPH">
    <property type="method" value="X-ray"/>
    <property type="resolution" value="2.40 A"/>
    <property type="chains" value="A=8-360"/>
</dbReference>
<dbReference type="PDB" id="6OPI">
    <property type="method" value="X-ray"/>
    <property type="resolution" value="3.00 A"/>
    <property type="chains" value="A=8-360"/>
</dbReference>
<dbReference type="PDB" id="6Q7K">
    <property type="method" value="X-ray"/>
    <property type="resolution" value="1.84 A"/>
    <property type="chains" value="A=1-360"/>
</dbReference>
<dbReference type="PDB" id="6Q7S">
    <property type="method" value="X-ray"/>
    <property type="resolution" value="1.73 A"/>
    <property type="chains" value="A=1-360"/>
</dbReference>
<dbReference type="PDB" id="6Q7T">
    <property type="method" value="X-ray"/>
    <property type="resolution" value="1.60 A"/>
    <property type="chains" value="A=1-360"/>
</dbReference>
<dbReference type="PDB" id="6QA1">
    <property type="method" value="X-ray"/>
    <property type="resolution" value="1.58 A"/>
    <property type="chains" value="A=1-360"/>
</dbReference>
<dbReference type="PDB" id="6QA3">
    <property type="method" value="X-ray"/>
    <property type="resolution" value="1.57 A"/>
    <property type="chains" value="A=1-360"/>
</dbReference>
<dbReference type="PDB" id="6QA4">
    <property type="method" value="X-ray"/>
    <property type="resolution" value="1.60 A"/>
    <property type="chains" value="A=1-360"/>
</dbReference>
<dbReference type="PDB" id="6QAG">
    <property type="method" value="X-ray"/>
    <property type="resolution" value="2.07 A"/>
    <property type="chains" value="A=1-360"/>
</dbReference>
<dbReference type="PDB" id="6QAH">
    <property type="method" value="X-ray"/>
    <property type="resolution" value="1.58 A"/>
    <property type="chains" value="A=1-360"/>
</dbReference>
<dbReference type="PDB" id="6QAL">
    <property type="method" value="X-ray"/>
    <property type="resolution" value="1.57 A"/>
    <property type="chains" value="A=1-360"/>
</dbReference>
<dbReference type="PDB" id="6QAQ">
    <property type="method" value="X-ray"/>
    <property type="resolution" value="1.58 A"/>
    <property type="chains" value="A=1-360"/>
</dbReference>
<dbReference type="PDB" id="6QAW">
    <property type="method" value="X-ray"/>
    <property type="resolution" value="1.84 A"/>
    <property type="chains" value="A=1-360"/>
</dbReference>
<dbReference type="PDB" id="6RQ4">
    <property type="method" value="X-ray"/>
    <property type="resolution" value="1.96 A"/>
    <property type="chains" value="A=1-360"/>
</dbReference>
<dbReference type="PDB" id="6SLG">
    <property type="method" value="X-ray"/>
    <property type="resolution" value="1.33 A"/>
    <property type="chains" value="A=1-360"/>
</dbReference>
<dbReference type="PDB" id="7AUV">
    <property type="method" value="X-ray"/>
    <property type="resolution" value="1.76 A"/>
    <property type="chains" value="A=1-360"/>
</dbReference>
<dbReference type="PDB" id="7E73">
    <property type="method" value="X-ray"/>
    <property type="resolution" value="2.28 A"/>
    <property type="chains" value="A=1-360"/>
</dbReference>
<dbReference type="PDB" id="7E75">
    <property type="method" value="X-ray"/>
    <property type="resolution" value="2.48 A"/>
    <property type="chains" value="A=1-360"/>
</dbReference>
<dbReference type="PDB" id="7NQQ">
    <property type="method" value="X-ray"/>
    <property type="resolution" value="1.94 A"/>
    <property type="chains" value="A=1-360"/>
</dbReference>
<dbReference type="PDB" id="7NQW">
    <property type="method" value="X-ray"/>
    <property type="resolution" value="1.77 A"/>
    <property type="chains" value="A=1-360"/>
</dbReference>
<dbReference type="PDB" id="7NR3">
    <property type="method" value="X-ray"/>
    <property type="resolution" value="1.90 A"/>
    <property type="chains" value="A=1-360"/>
</dbReference>
<dbReference type="PDB" id="7NR5">
    <property type="method" value="X-ray"/>
    <property type="resolution" value="1.77 A"/>
    <property type="chains" value="A=1-360"/>
</dbReference>
<dbReference type="PDB" id="7NR8">
    <property type="method" value="X-ray"/>
    <property type="resolution" value="1.63 A"/>
    <property type="chains" value="A=1-360"/>
</dbReference>
<dbReference type="PDB" id="7NR9">
    <property type="method" value="X-ray"/>
    <property type="resolution" value="1.91 A"/>
    <property type="chains" value="A=1-360"/>
</dbReference>
<dbReference type="PDB" id="7OPM">
    <property type="method" value="X-ray"/>
    <property type="resolution" value="2.45 A"/>
    <property type="chains" value="A=1-360"/>
</dbReference>
<dbReference type="PDB" id="7W5O">
    <property type="method" value="X-ray"/>
    <property type="resolution" value="2.35 A"/>
    <property type="chains" value="A/B=1-360"/>
</dbReference>
<dbReference type="PDB" id="7X4U">
    <property type="method" value="X-ray"/>
    <property type="resolution" value="1.98 A"/>
    <property type="chains" value="A=1-360"/>
</dbReference>
<dbReference type="PDB" id="7XC1">
    <property type="method" value="X-ray"/>
    <property type="resolution" value="2.09 A"/>
    <property type="chains" value="A/B=1-360"/>
</dbReference>
<dbReference type="PDB" id="8AO2">
    <property type="method" value="X-ray"/>
    <property type="resolution" value="1.80 A"/>
    <property type="chains" value="A=1-360"/>
</dbReference>
<dbReference type="PDB" id="8AO3">
    <property type="method" value="X-ray"/>
    <property type="resolution" value="1.78 A"/>
    <property type="chains" value="A=1-360"/>
</dbReference>
<dbReference type="PDB" id="8AO4">
    <property type="method" value="X-ray"/>
    <property type="resolution" value="1.82 A"/>
    <property type="chains" value="A=1-360"/>
</dbReference>
<dbReference type="PDB" id="8AO5">
    <property type="method" value="X-ray"/>
    <property type="resolution" value="1.59 A"/>
    <property type="chains" value="A=1-360"/>
</dbReference>
<dbReference type="PDB" id="8AO6">
    <property type="method" value="X-ray"/>
    <property type="resolution" value="1.81 A"/>
    <property type="chains" value="A=1-360"/>
</dbReference>
<dbReference type="PDB" id="8AO7">
    <property type="method" value="X-ray"/>
    <property type="resolution" value="1.61 A"/>
    <property type="chains" value="A=1-360"/>
</dbReference>
<dbReference type="PDB" id="8AO8">
    <property type="method" value="X-ray"/>
    <property type="resolution" value="1.70 A"/>
    <property type="chains" value="A=1-360"/>
</dbReference>
<dbReference type="PDB" id="8AO9">
    <property type="method" value="X-ray"/>
    <property type="resolution" value="1.62 A"/>
    <property type="chains" value="A=1-360"/>
</dbReference>
<dbReference type="PDB" id="8AOA">
    <property type="method" value="X-ray"/>
    <property type="resolution" value="1.62 A"/>
    <property type="chains" value="A=1-360"/>
</dbReference>
<dbReference type="PDB" id="8AOB">
    <property type="method" value="X-ray"/>
    <property type="resolution" value="1.62 A"/>
    <property type="chains" value="A=1-360"/>
</dbReference>
<dbReference type="PDB" id="8AOC">
    <property type="method" value="X-ray"/>
    <property type="resolution" value="1.62 A"/>
    <property type="chains" value="A=1-360"/>
</dbReference>
<dbReference type="PDB" id="8AOD">
    <property type="method" value="X-ray"/>
    <property type="resolution" value="1.62 A"/>
    <property type="chains" value="A=1-360"/>
</dbReference>
<dbReference type="PDB" id="8AOE">
    <property type="method" value="X-ray"/>
    <property type="resolution" value="1.69 A"/>
    <property type="chains" value="A=1-360"/>
</dbReference>
<dbReference type="PDB" id="8AOF">
    <property type="method" value="X-ray"/>
    <property type="resolution" value="1.61 A"/>
    <property type="chains" value="A=1-360"/>
</dbReference>
<dbReference type="PDB" id="8AOG">
    <property type="method" value="X-ray"/>
    <property type="resolution" value="1.60 A"/>
    <property type="chains" value="A=1-360"/>
</dbReference>
<dbReference type="PDB" id="8AOH">
    <property type="method" value="X-ray"/>
    <property type="resolution" value="1.60 A"/>
    <property type="chains" value="A=1-360"/>
</dbReference>
<dbReference type="PDB" id="8AOI">
    <property type="method" value="X-ray"/>
    <property type="resolution" value="1.60 A"/>
    <property type="chains" value="A=1-360"/>
</dbReference>
<dbReference type="PDB" id="8AOJ">
    <property type="method" value="X-ray"/>
    <property type="resolution" value="1.12 A"/>
    <property type="chains" value="A=1-360"/>
</dbReference>
<dbReference type="PDB" id="8PSR">
    <property type="method" value="X-ray"/>
    <property type="resolution" value="1.85 A"/>
    <property type="chains" value="A=1-360"/>
</dbReference>
<dbReference type="PDB" id="8PST">
    <property type="method" value="X-ray"/>
    <property type="resolution" value="1.90 A"/>
    <property type="chains" value="A=1-360"/>
</dbReference>
<dbReference type="PDB" id="8PSW">
    <property type="method" value="X-ray"/>
    <property type="resolution" value="2.00 A"/>
    <property type="chains" value="A=1-360"/>
</dbReference>
<dbReference type="PDB" id="8PSY">
    <property type="method" value="X-ray"/>
    <property type="resolution" value="2.55 A"/>
    <property type="chains" value="A=1-360"/>
</dbReference>
<dbReference type="PDB" id="8PT0">
    <property type="method" value="X-ray"/>
    <property type="resolution" value="1.65 A"/>
    <property type="chains" value="A=1-360"/>
</dbReference>
<dbReference type="PDB" id="8PT1">
    <property type="method" value="X-ray"/>
    <property type="resolution" value="1.80 A"/>
    <property type="chains" value="A=1-360"/>
</dbReference>
<dbReference type="PDB" id="8PT3">
    <property type="method" value="X-ray"/>
    <property type="resolution" value="1.80 A"/>
    <property type="chains" value="A=1-360"/>
</dbReference>
<dbReference type="PDB" id="8PT5">
    <property type="method" value="X-ray"/>
    <property type="resolution" value="1.95 A"/>
    <property type="chains" value="A=1-360"/>
</dbReference>
<dbReference type="PDB" id="8PVU">
    <property type="method" value="EM"/>
    <property type="resolution" value="3.50 A"/>
    <property type="chains" value="E=1-360"/>
</dbReference>
<dbReference type="PDB" id="8R5F">
    <property type="method" value="X-ray"/>
    <property type="resolution" value="1.65 A"/>
    <property type="chains" value="A=1-360"/>
</dbReference>
<dbReference type="PDB" id="8U8J">
    <property type="method" value="X-ray"/>
    <property type="resolution" value="2.10 A"/>
    <property type="chains" value="A=7-360"/>
</dbReference>
<dbReference type="PDB" id="8U8K">
    <property type="method" value="X-ray"/>
    <property type="resolution" value="2.10 A"/>
    <property type="chains" value="A=7-360"/>
</dbReference>
<dbReference type="PDB" id="8ZJV">
    <property type="method" value="X-ray"/>
    <property type="resolution" value="1.80 A"/>
    <property type="chains" value="A=10-360"/>
</dbReference>
<dbReference type="PDBsum" id="1PME"/>
<dbReference type="PDBsum" id="1TVO"/>
<dbReference type="PDBsum" id="1WZY"/>
<dbReference type="PDBsum" id="2OJG"/>
<dbReference type="PDBsum" id="2OJI"/>
<dbReference type="PDBsum" id="2OJJ"/>
<dbReference type="PDBsum" id="2Y9Q"/>
<dbReference type="PDBsum" id="3D42"/>
<dbReference type="PDBsum" id="3D44"/>
<dbReference type="PDBsum" id="3I5Z"/>
<dbReference type="PDBsum" id="3I60"/>
<dbReference type="PDBsum" id="3SA0"/>
<dbReference type="PDBsum" id="3TEI"/>
<dbReference type="PDBsum" id="3W55"/>
<dbReference type="PDBsum" id="4FMQ"/>
<dbReference type="PDBsum" id="4FUX"/>
<dbReference type="PDBsum" id="4FUY"/>
<dbReference type="PDBsum" id="4FV0"/>
<dbReference type="PDBsum" id="4FV1"/>
<dbReference type="PDBsum" id="4FV2"/>
<dbReference type="PDBsum" id="4FV3"/>
<dbReference type="PDBsum" id="4FV4"/>
<dbReference type="PDBsum" id="4FV5"/>
<dbReference type="PDBsum" id="4FV6"/>
<dbReference type="PDBsum" id="4FV7"/>
<dbReference type="PDBsum" id="4FV8"/>
<dbReference type="PDBsum" id="4FV9"/>
<dbReference type="PDBsum" id="4G6N"/>
<dbReference type="PDBsum" id="4G6O"/>
<dbReference type="PDBsum" id="4H3P"/>
<dbReference type="PDBsum" id="4H3Q"/>
<dbReference type="PDBsum" id="4IZ5"/>
<dbReference type="PDBsum" id="4IZ7"/>
<dbReference type="PDBsum" id="4IZA"/>
<dbReference type="PDBsum" id="4N0S"/>
<dbReference type="PDBsum" id="4NIF"/>
<dbReference type="PDBsum" id="4O6E"/>
<dbReference type="PDBsum" id="4QP1"/>
<dbReference type="PDBsum" id="4QP2"/>
<dbReference type="PDBsum" id="4QP3"/>
<dbReference type="PDBsum" id="4QP4"/>
<dbReference type="PDBsum" id="4QP6"/>
<dbReference type="PDBsum" id="4QP7"/>
<dbReference type="PDBsum" id="4QP8"/>
<dbReference type="PDBsum" id="4QP9"/>
<dbReference type="PDBsum" id="4QPA"/>
<dbReference type="PDBsum" id="4QTA"/>
<dbReference type="PDBsum" id="4QTE"/>
<dbReference type="PDBsum" id="4XJ0"/>
<dbReference type="PDBsum" id="4ZXT"/>
<dbReference type="PDBsum" id="4ZZM"/>
<dbReference type="PDBsum" id="4ZZN"/>
<dbReference type="PDBsum" id="4ZZO"/>
<dbReference type="PDBsum" id="5AX3"/>
<dbReference type="PDBsum" id="5BUE"/>
<dbReference type="PDBsum" id="5BUI"/>
<dbReference type="PDBsum" id="5BUJ"/>
<dbReference type="PDBsum" id="5BVD"/>
<dbReference type="PDBsum" id="5BVE"/>
<dbReference type="PDBsum" id="5BVF"/>
<dbReference type="PDBsum" id="5K4I"/>
<dbReference type="PDBsum" id="5LCJ"/>
<dbReference type="PDBsum" id="5LCK"/>
<dbReference type="PDBsum" id="5NGU"/>
<dbReference type="PDBsum" id="5NHF"/>
<dbReference type="PDBsum" id="5NHH"/>
<dbReference type="PDBsum" id="5NHJ"/>
<dbReference type="PDBsum" id="5NHL"/>
<dbReference type="PDBsum" id="5NHO"/>
<dbReference type="PDBsum" id="5NHP"/>
<dbReference type="PDBsum" id="5NHV"/>
<dbReference type="PDBsum" id="5V60"/>
<dbReference type="PDBsum" id="5V61"/>
<dbReference type="PDBsum" id="5V62"/>
<dbReference type="PDBsum" id="5WP1"/>
<dbReference type="PDBsum" id="6D5Y"/>
<dbReference type="PDBsum" id="6DMG"/>
<dbReference type="PDBsum" id="6G54"/>
<dbReference type="PDBsum" id="6G8X"/>
<dbReference type="PDBsum" id="6G91"/>
<dbReference type="PDBsum" id="6G92"/>
<dbReference type="PDBsum" id="6G93"/>
<dbReference type="PDBsum" id="6G97"/>
<dbReference type="PDBsum" id="6G9A"/>
<dbReference type="PDBsum" id="6G9D"/>
<dbReference type="PDBsum" id="6G9H"/>
<dbReference type="PDBsum" id="6G9J"/>
<dbReference type="PDBsum" id="6G9K"/>
<dbReference type="PDBsum" id="6G9M"/>
<dbReference type="PDBsum" id="6G9N"/>
<dbReference type="PDBsum" id="6GDM"/>
<dbReference type="PDBsum" id="6GDQ"/>
<dbReference type="PDBsum" id="6GE0"/>
<dbReference type="PDBsum" id="6GJB"/>
<dbReference type="PDBsum" id="6GJD"/>
<dbReference type="PDBsum" id="6NBS"/>
<dbReference type="PDBsum" id="6OPG"/>
<dbReference type="PDBsum" id="6OPH"/>
<dbReference type="PDBsum" id="6OPI"/>
<dbReference type="PDBsum" id="6Q7K"/>
<dbReference type="PDBsum" id="6Q7S"/>
<dbReference type="PDBsum" id="6Q7T"/>
<dbReference type="PDBsum" id="6QA1"/>
<dbReference type="PDBsum" id="6QA3"/>
<dbReference type="PDBsum" id="6QA4"/>
<dbReference type="PDBsum" id="6QAG"/>
<dbReference type="PDBsum" id="6QAH"/>
<dbReference type="PDBsum" id="6QAL"/>
<dbReference type="PDBsum" id="6QAQ"/>
<dbReference type="PDBsum" id="6QAW"/>
<dbReference type="PDBsum" id="6RQ4"/>
<dbReference type="PDBsum" id="6SLG"/>
<dbReference type="PDBsum" id="7AUV"/>
<dbReference type="PDBsum" id="7E73"/>
<dbReference type="PDBsum" id="7E75"/>
<dbReference type="PDBsum" id="7NQQ"/>
<dbReference type="PDBsum" id="7NQW"/>
<dbReference type="PDBsum" id="7NR3"/>
<dbReference type="PDBsum" id="7NR5"/>
<dbReference type="PDBsum" id="7NR8"/>
<dbReference type="PDBsum" id="7NR9"/>
<dbReference type="PDBsum" id="7OPM"/>
<dbReference type="PDBsum" id="7W5O"/>
<dbReference type="PDBsum" id="7X4U"/>
<dbReference type="PDBsum" id="7XC1"/>
<dbReference type="PDBsum" id="8AO2"/>
<dbReference type="PDBsum" id="8AO3"/>
<dbReference type="PDBsum" id="8AO4"/>
<dbReference type="PDBsum" id="8AO5"/>
<dbReference type="PDBsum" id="8AO6"/>
<dbReference type="PDBsum" id="8AO7"/>
<dbReference type="PDBsum" id="8AO8"/>
<dbReference type="PDBsum" id="8AO9"/>
<dbReference type="PDBsum" id="8AOA"/>
<dbReference type="PDBsum" id="8AOB"/>
<dbReference type="PDBsum" id="8AOC"/>
<dbReference type="PDBsum" id="8AOD"/>
<dbReference type="PDBsum" id="8AOE"/>
<dbReference type="PDBsum" id="8AOF"/>
<dbReference type="PDBsum" id="8AOG"/>
<dbReference type="PDBsum" id="8AOH"/>
<dbReference type="PDBsum" id="8AOI"/>
<dbReference type="PDBsum" id="8AOJ"/>
<dbReference type="PDBsum" id="8PSR"/>
<dbReference type="PDBsum" id="8PST"/>
<dbReference type="PDBsum" id="8PSW"/>
<dbReference type="PDBsum" id="8PSY"/>
<dbReference type="PDBsum" id="8PT0"/>
<dbReference type="PDBsum" id="8PT1"/>
<dbReference type="PDBsum" id="8PT3"/>
<dbReference type="PDBsum" id="8PT5"/>
<dbReference type="PDBsum" id="8PVU"/>
<dbReference type="PDBsum" id="8R5F"/>
<dbReference type="PDBsum" id="8U8J"/>
<dbReference type="PDBsum" id="8U8K"/>
<dbReference type="PDBsum" id="8ZJV"/>
<dbReference type="BMRB" id="P28482"/>
<dbReference type="EMDB" id="EMD-17972"/>
<dbReference type="EMDB" id="EMD-17977"/>
<dbReference type="EMDB" id="EMD-17978"/>
<dbReference type="EMDB" id="EMD-17981"/>
<dbReference type="EMDB" id="EMD-17982"/>
<dbReference type="EMDB" id="EMD-17983"/>
<dbReference type="EMDB" id="EMD-17984"/>
<dbReference type="EMDB" id="EMD-17985"/>
<dbReference type="EMDB" id="EMD-17986"/>
<dbReference type="EMDB" id="EMD-17987"/>
<dbReference type="SMR" id="P28482"/>
<dbReference type="BioGRID" id="111580">
    <property type="interactions" value="464"/>
</dbReference>
<dbReference type="CORUM" id="P28482"/>
<dbReference type="DIP" id="DIP-519N"/>
<dbReference type="ELM" id="P28482"/>
<dbReference type="FunCoup" id="P28482">
    <property type="interactions" value="4794"/>
</dbReference>
<dbReference type="IntAct" id="P28482">
    <property type="interactions" value="204"/>
</dbReference>
<dbReference type="MINT" id="P28482"/>
<dbReference type="STRING" id="9606.ENSP00000215832"/>
<dbReference type="BindingDB" id="P28482"/>
<dbReference type="ChEMBL" id="CHEMBL4040"/>
<dbReference type="DrugBank" id="DB07788">
    <property type="generic name" value="(3R,5Z,8S,9S,11E)-8,9,16-TRIHYDROXY-14-METHOXY-3-METHYL-3,4,9,10-TETRAHYDRO-1H-2-BENZOXACYCLOTETRADECINE-1,7(8H)-DIONE"/>
</dbReference>
<dbReference type="DrugBank" id="DB07264">
    <property type="generic name" value="(S)-N-(1-(3-CHLORO-4-FLUOROPHENYL)-2-HYDROXYETHYL)-4-(4-(3-CHLOROPHENYL)-1H-PYRAZOL-3-YL)-1H-PYRROLE-2-CARBOXAMIDE"/>
</dbReference>
<dbReference type="DrugBank" id="DB08521">
    <property type="generic name" value="4-[4-(4-Fluorophenyl)-2-[4-[(R)-methylsulfinyl]phenyl]-1H-imidazol-5-yl]pyridine"/>
</dbReference>
<dbReference type="DrugBank" id="DB07794">
    <property type="generic name" value="5-(2-PHENYLPYRAZOLO[1,5-A]PYRIDIN-3-YL)-1H-PYRAZOLO[3,4-C]PYRIDAZIN-3-AMINE"/>
</dbReference>
<dbReference type="DrugBank" id="DB08513">
    <property type="generic name" value="[4-({5-(AMINOCARBONYL)-4-[(3-METHYLPHENYL)AMINO]PYRIMIDIN-2-YL}AMINO)PHENYL]ACETIC ACID"/>
</dbReference>
<dbReference type="DrugBank" id="DB00945">
    <property type="generic name" value="Acetylsalicylic acid"/>
</dbReference>
<dbReference type="DrugBank" id="DB01169">
    <property type="generic name" value="Arsenic trioxide"/>
</dbReference>
<dbReference type="DrugBank" id="DB03777">
    <property type="generic name" value="Bisindolylmaleimide I"/>
</dbReference>
<dbReference type="DrugBank" id="DB12429">
    <property type="generic name" value="CI-1040"/>
</dbReference>
<dbReference type="DrugBank" id="DB02587">
    <property type="generic name" value="Colforsin"/>
</dbReference>
<dbReference type="DrugBank" id="DB04367">
    <property type="generic name" value="Debromohymenialdisine"/>
</dbReference>
<dbReference type="DrugBank" id="DB07905">
    <property type="generic name" value="Hypothemycin"/>
</dbReference>
<dbReference type="DrugBank" id="DB01017">
    <property type="generic name" value="Minocycline"/>
</dbReference>
<dbReference type="DrugBank" id="DB06877">
    <property type="generic name" value="N,N-DIMETHYL-4-(4-PHENYL-1H-PYRAZOL-3-YL)-1H-PYRROLE-2-CARBOXAMIDE"/>
</dbReference>
<dbReference type="DrugBank" id="DB07010">
    <property type="generic name" value="N-BENZYL-4-[4-(3-CHLOROPHENYL)-1H-PYRAZOL-3-YL]-1H-PYRROLE-2-CARBOXAMIDE"/>
</dbReference>
<dbReference type="DrugBank" id="DB02116">
    <property type="generic name" value="Olomoucine"/>
</dbReference>
<dbReference type="DrugBank" id="DB06641">
    <property type="generic name" value="Perifosine"/>
</dbReference>
<dbReference type="DrugBank" id="DB02482">
    <property type="generic name" value="Phosphonothreonine"/>
</dbReference>
<dbReference type="DrugBank" id="DB02733">
    <property type="generic name" value="Purvalanol"/>
</dbReference>
<dbReference type="DrugBank" id="DB15281">
    <property type="generic name" value="Ravoxertinib"/>
</dbReference>
<dbReference type="DrugBank" id="DB04338">
    <property type="generic name" value="SB220025"/>
</dbReference>
<dbReference type="DrugBank" id="DB06195">
    <property type="generic name" value="Seliciclib"/>
</dbReference>
<dbReference type="DrugBank" id="DB18806">
    <property type="generic name" value="Temuterkib"/>
</dbReference>
<dbReference type="DrugBank" id="DB04462">
    <property type="generic name" value="Tetrabromo-2-Benzotriazole"/>
</dbReference>
<dbReference type="DrugBank" id="DB11120">
    <property type="generic name" value="Turpentine"/>
</dbReference>
<dbReference type="DrugBank" id="DB13930">
    <property type="generic name" value="Ulixertinib"/>
</dbReference>
<dbReference type="DrugCentral" id="P28482"/>
<dbReference type="GuidetoPHARMACOLOGY" id="1495"/>
<dbReference type="MoonDB" id="P28482">
    <property type="type" value="Predicted"/>
</dbReference>
<dbReference type="MoonProt" id="P28482"/>
<dbReference type="GlyGen" id="P28482">
    <property type="glycosylation" value="1 site, 1 O-linked glycan (1 site)"/>
</dbReference>
<dbReference type="iPTMnet" id="P28482"/>
<dbReference type="MetOSite" id="P28482"/>
<dbReference type="PhosphoSitePlus" id="P28482"/>
<dbReference type="SwissPalm" id="P28482"/>
<dbReference type="BioMuta" id="MAPK1"/>
<dbReference type="DMDM" id="119554"/>
<dbReference type="OGP" id="P28482"/>
<dbReference type="CPTAC" id="CPTAC-1352"/>
<dbReference type="CPTAC" id="CPTAC-1353"/>
<dbReference type="CPTAC" id="CPTAC-1354"/>
<dbReference type="CPTAC" id="CPTAC-1541"/>
<dbReference type="CPTAC" id="CPTAC-3200"/>
<dbReference type="CPTAC" id="CPTAC-5809"/>
<dbReference type="CPTAC" id="CPTAC-5810"/>
<dbReference type="CPTAC" id="CPTAC-5811"/>
<dbReference type="CPTAC" id="CPTAC-5812"/>
<dbReference type="CPTAC" id="CPTAC-870"/>
<dbReference type="CPTAC" id="CPTAC-871"/>
<dbReference type="CPTAC" id="non-CPTAC-5406"/>
<dbReference type="CPTAC" id="non-CPTAC-5721"/>
<dbReference type="CPTAC" id="non-CPTAC-5722"/>
<dbReference type="CPTAC" id="non-CPTAC-5723"/>
<dbReference type="jPOST" id="P28482"/>
<dbReference type="MassIVE" id="P28482"/>
<dbReference type="PaxDb" id="9606-ENSP00000215832"/>
<dbReference type="PeptideAtlas" id="P28482"/>
<dbReference type="ProteomicsDB" id="1826"/>
<dbReference type="ProteomicsDB" id="54488">
    <molecule id="P28482-1"/>
</dbReference>
<dbReference type="Pumba" id="P28482"/>
<dbReference type="ABCD" id="P28482">
    <property type="antibodies" value="2 sequenced antibodies"/>
</dbReference>
<dbReference type="Antibodypedia" id="3785">
    <property type="antibodies" value="1927 antibodies from 55 providers"/>
</dbReference>
<dbReference type="CPTC" id="P28482">
    <property type="antibodies" value="4 antibodies"/>
</dbReference>
<dbReference type="DNASU" id="5594"/>
<dbReference type="Ensembl" id="ENST00000215832.11">
    <molecule id="P28482-1"/>
    <property type="protein sequence ID" value="ENSP00000215832.7"/>
    <property type="gene ID" value="ENSG00000100030.15"/>
</dbReference>
<dbReference type="Ensembl" id="ENST00000398822.7">
    <molecule id="P28482-1"/>
    <property type="protein sequence ID" value="ENSP00000381803.3"/>
    <property type="gene ID" value="ENSG00000100030.15"/>
</dbReference>
<dbReference type="Ensembl" id="ENST00000544786.1">
    <molecule id="P28482-2"/>
    <property type="protein sequence ID" value="ENSP00000440842.1"/>
    <property type="gene ID" value="ENSG00000100030.15"/>
</dbReference>
<dbReference type="GeneID" id="5594"/>
<dbReference type="KEGG" id="hsa:5594"/>
<dbReference type="MANE-Select" id="ENST00000215832.11">
    <property type="protein sequence ID" value="ENSP00000215832.7"/>
    <property type="RefSeq nucleotide sequence ID" value="NM_002745.5"/>
    <property type="RefSeq protein sequence ID" value="NP_002736.3"/>
</dbReference>
<dbReference type="UCSC" id="uc010gtk.2">
    <molecule id="P28482-1"/>
    <property type="organism name" value="human"/>
</dbReference>
<dbReference type="AGR" id="HGNC:6871"/>
<dbReference type="CTD" id="5594"/>
<dbReference type="DisGeNET" id="5594"/>
<dbReference type="GeneCards" id="MAPK1"/>
<dbReference type="HGNC" id="HGNC:6871">
    <property type="gene designation" value="MAPK1"/>
</dbReference>
<dbReference type="HPA" id="ENSG00000100030">
    <property type="expression patterns" value="Low tissue specificity"/>
</dbReference>
<dbReference type="MalaCards" id="MAPK1"/>
<dbReference type="MIM" id="176948">
    <property type="type" value="gene"/>
</dbReference>
<dbReference type="MIM" id="619087">
    <property type="type" value="phenotype"/>
</dbReference>
<dbReference type="neXtProt" id="NX_P28482"/>
<dbReference type="OpenTargets" id="ENSG00000100030"/>
<dbReference type="Orphanet" id="261330">
    <property type="disease" value="Distal 22q11.2 microdeletion syndrome"/>
</dbReference>
<dbReference type="PharmGKB" id="PA30616"/>
<dbReference type="VEuPathDB" id="HostDB:ENSG00000100030"/>
<dbReference type="eggNOG" id="KOG0660">
    <property type="taxonomic scope" value="Eukaryota"/>
</dbReference>
<dbReference type="GeneTree" id="ENSGT00940000156771"/>
<dbReference type="HOGENOM" id="CLU_000288_181_1_1"/>
<dbReference type="InParanoid" id="P28482"/>
<dbReference type="OMA" id="SFFDFDY"/>
<dbReference type="OrthoDB" id="192887at2759"/>
<dbReference type="PAN-GO" id="P28482">
    <property type="GO annotations" value="5 GO annotations based on evolutionary models"/>
</dbReference>
<dbReference type="PhylomeDB" id="P28482"/>
<dbReference type="TreeFam" id="TF105097"/>
<dbReference type="BRENDA" id="2.7.11.24">
    <property type="organism ID" value="2681"/>
</dbReference>
<dbReference type="PathwayCommons" id="P28482"/>
<dbReference type="Reactome" id="R-HSA-111995">
    <property type="pathway name" value="phospho-PLA2 pathway"/>
</dbReference>
<dbReference type="Reactome" id="R-HSA-112409">
    <property type="pathway name" value="RAF-independent MAPK1/3 activation"/>
</dbReference>
<dbReference type="Reactome" id="R-HSA-112411">
    <property type="pathway name" value="MAPK1 (ERK2) activation"/>
</dbReference>
<dbReference type="Reactome" id="R-HSA-1181150">
    <property type="pathway name" value="Signaling by NODAL"/>
</dbReference>
<dbReference type="Reactome" id="R-HSA-1295596">
    <property type="pathway name" value="Spry regulation of FGF signaling"/>
</dbReference>
<dbReference type="Reactome" id="R-HSA-1502540">
    <property type="pathway name" value="Signaling by Activin"/>
</dbReference>
<dbReference type="Reactome" id="R-HSA-162658">
    <property type="pathway name" value="Golgi Cisternae Pericentriolar Stack Reorganization"/>
</dbReference>
<dbReference type="Reactome" id="R-HSA-170968">
    <property type="pathway name" value="Frs2-mediated activation"/>
</dbReference>
<dbReference type="Reactome" id="R-HSA-198753">
    <property type="pathway name" value="ERK/MAPK targets"/>
</dbReference>
<dbReference type="Reactome" id="R-HSA-202670">
    <property type="pathway name" value="ERKs are inactivated"/>
</dbReference>
<dbReference type="Reactome" id="R-HSA-2029482">
    <property type="pathway name" value="Regulation of actin dynamics for phagocytic cup formation"/>
</dbReference>
<dbReference type="Reactome" id="R-HSA-2173795">
    <property type="pathway name" value="Downregulation of SMAD2/3:SMAD4 transcriptional activity"/>
</dbReference>
<dbReference type="Reactome" id="R-HSA-2173796">
    <property type="pathway name" value="SMAD2/SMAD3:SMAD4 heterotrimer regulates transcription"/>
</dbReference>
<dbReference type="Reactome" id="R-HSA-2559580">
    <property type="pathway name" value="Oxidative Stress Induced Senescence"/>
</dbReference>
<dbReference type="Reactome" id="R-HSA-2559582">
    <property type="pathway name" value="Senescence-Associated Secretory Phenotype (SASP)"/>
</dbReference>
<dbReference type="Reactome" id="R-HSA-2559585">
    <property type="pathway name" value="Oncogene Induced Senescence"/>
</dbReference>
<dbReference type="Reactome" id="R-HSA-2871796">
    <property type="pathway name" value="FCERI mediated MAPK activation"/>
</dbReference>
<dbReference type="Reactome" id="R-HSA-3371453">
    <property type="pathway name" value="Regulation of HSF1-mediated heat shock response"/>
</dbReference>
<dbReference type="Reactome" id="R-HSA-375165">
    <property type="pathway name" value="NCAM signaling for neurite out-growth"/>
</dbReference>
<dbReference type="Reactome" id="R-HSA-437239">
    <property type="pathway name" value="Recycling pathway of L1"/>
</dbReference>
<dbReference type="Reactome" id="R-HSA-444257">
    <property type="pathway name" value="RSK activation"/>
</dbReference>
<dbReference type="Reactome" id="R-HSA-445144">
    <property type="pathway name" value="Signal transduction by L1"/>
</dbReference>
<dbReference type="Reactome" id="R-HSA-450341">
    <property type="pathway name" value="Activation of the AP-1 family of transcription factors"/>
</dbReference>
<dbReference type="Reactome" id="R-HSA-456926">
    <property type="pathway name" value="Thrombin signalling through proteinase activated receptors (PARs)"/>
</dbReference>
<dbReference type="Reactome" id="R-HSA-5654726">
    <property type="pathway name" value="Negative regulation of FGFR1 signaling"/>
</dbReference>
<dbReference type="Reactome" id="R-HSA-5654727">
    <property type="pathway name" value="Negative regulation of FGFR2 signaling"/>
</dbReference>
<dbReference type="Reactome" id="R-HSA-5654732">
    <property type="pathway name" value="Negative regulation of FGFR3 signaling"/>
</dbReference>
<dbReference type="Reactome" id="R-HSA-5654733">
    <property type="pathway name" value="Negative regulation of FGFR4 signaling"/>
</dbReference>
<dbReference type="Reactome" id="R-HSA-5663213">
    <property type="pathway name" value="RHO GTPases Activate WASPs and WAVEs"/>
</dbReference>
<dbReference type="Reactome" id="R-HSA-5668599">
    <property type="pathway name" value="RHO GTPases Activate NADPH Oxidases"/>
</dbReference>
<dbReference type="Reactome" id="R-HSA-5673001">
    <property type="pathway name" value="RAF/MAP kinase cascade"/>
</dbReference>
<dbReference type="Reactome" id="R-HSA-5674135">
    <property type="pathway name" value="MAP2K and MAPK activation"/>
</dbReference>
<dbReference type="Reactome" id="R-HSA-5674499">
    <property type="pathway name" value="Negative feedback regulation of MAPK pathway"/>
</dbReference>
<dbReference type="Reactome" id="R-HSA-5675221">
    <property type="pathway name" value="Negative regulation of MAPK pathway"/>
</dbReference>
<dbReference type="Reactome" id="R-HSA-6798695">
    <property type="pathway name" value="Neutrophil degranulation"/>
</dbReference>
<dbReference type="Reactome" id="R-HSA-6802946">
    <property type="pathway name" value="Signaling by moderate kinase activity BRAF mutants"/>
</dbReference>
<dbReference type="Reactome" id="R-HSA-6802948">
    <property type="pathway name" value="Signaling by high-kinase activity BRAF mutants"/>
</dbReference>
<dbReference type="Reactome" id="R-HSA-6802952">
    <property type="pathway name" value="Signaling by BRAF and RAF1 fusions"/>
</dbReference>
<dbReference type="Reactome" id="R-HSA-6802955">
    <property type="pathway name" value="Paradoxical activation of RAF signaling by kinase inactive BRAF"/>
</dbReference>
<dbReference type="Reactome" id="R-HSA-6811558">
    <property type="pathway name" value="PI5P, PP2A and IER3 Regulate PI3K/AKT Signaling"/>
</dbReference>
<dbReference type="Reactome" id="R-HSA-74749">
    <property type="pathway name" value="Signal attenuation"/>
</dbReference>
<dbReference type="Reactome" id="R-HSA-877300">
    <property type="pathway name" value="Interferon gamma signaling"/>
</dbReference>
<dbReference type="Reactome" id="R-HSA-879415">
    <property type="pathway name" value="Advanced glycosylation endproduct receptor signaling"/>
</dbReference>
<dbReference type="Reactome" id="R-HSA-881907">
    <property type="pathway name" value="Gastrin-CREB signalling pathway via PKC and MAPK"/>
</dbReference>
<dbReference type="Reactome" id="R-HSA-8939211">
    <property type="pathway name" value="ESR-mediated signaling"/>
</dbReference>
<dbReference type="Reactome" id="R-HSA-8940973">
    <property type="pathway name" value="RUNX2 regulates osteoblast differentiation"/>
</dbReference>
<dbReference type="Reactome" id="R-HSA-8943724">
    <property type="pathway name" value="Regulation of PTEN gene transcription"/>
</dbReference>
<dbReference type="Reactome" id="R-HSA-9627069">
    <property type="pathway name" value="Regulation of the apoptosome activity"/>
</dbReference>
<dbReference type="Reactome" id="R-HSA-9634635">
    <property type="pathway name" value="Estrogen-stimulated signaling through PRKCZ"/>
</dbReference>
<dbReference type="Reactome" id="R-HSA-9634638">
    <property type="pathway name" value="Estrogen-dependent nuclear events downstream of ESR-membrane signaling"/>
</dbReference>
<dbReference type="Reactome" id="R-HSA-9635465">
    <property type="pathway name" value="Suppression of apoptosis"/>
</dbReference>
<dbReference type="Reactome" id="R-HSA-9649948">
    <property type="pathway name" value="Signaling downstream of RAS mutants"/>
</dbReference>
<dbReference type="Reactome" id="R-HSA-9652169">
    <property type="pathway name" value="Signaling by MAP2K mutants"/>
</dbReference>
<dbReference type="Reactome" id="R-HSA-9652817">
    <property type="pathway name" value="Signaling by MAPK mutants"/>
</dbReference>
<dbReference type="Reactome" id="R-HSA-9656223">
    <property type="pathway name" value="Signaling by RAF1 mutants"/>
</dbReference>
<dbReference type="Reactome" id="R-HSA-9664422">
    <property type="pathway name" value="FCGR3A-mediated phagocytosis"/>
</dbReference>
<dbReference type="Reactome" id="R-HSA-9725371">
    <property type="pathway name" value="Nuclear events stimulated by ALK signaling in cancer"/>
</dbReference>
<dbReference type="Reactome" id="R-HSA-9732724">
    <property type="pathway name" value="IFNG signaling activates MAPKs"/>
</dbReference>
<dbReference type="Reactome" id="R-HSA-9768919">
    <property type="pathway name" value="NPAS4 regulates expression of target genes"/>
</dbReference>
<dbReference type="Reactome" id="R-HSA-982772">
    <property type="pathway name" value="Growth hormone receptor signaling"/>
</dbReference>
<dbReference type="Reactome" id="R-HSA-9842640">
    <property type="pathway name" value="Signaling by LTK in cancer"/>
</dbReference>
<dbReference type="Reactome" id="R-HSA-9856649">
    <property type="pathway name" value="Transcriptional and post-translational regulation of MITF-M expression and activity"/>
</dbReference>
<dbReference type="SABIO-RK" id="P28482"/>
<dbReference type="SignaLink" id="P28482"/>
<dbReference type="SIGNOR" id="P28482"/>
<dbReference type="BioGRID-ORCS" id="5594">
    <property type="hits" value="154 hits in 1216 CRISPR screens"/>
</dbReference>
<dbReference type="CD-CODE" id="8C2F96ED">
    <property type="entry name" value="Centrosome"/>
</dbReference>
<dbReference type="CD-CODE" id="FB4E32DD">
    <property type="entry name" value="Presynaptic clusters and postsynaptic densities"/>
</dbReference>
<dbReference type="ChiTaRS" id="MAPK1">
    <property type="organism name" value="human"/>
</dbReference>
<dbReference type="EvolutionaryTrace" id="P28482"/>
<dbReference type="GeneWiki" id="MAPK1"/>
<dbReference type="GenomeRNAi" id="5594"/>
<dbReference type="Pharos" id="P28482">
    <property type="development level" value="Tchem"/>
</dbReference>
<dbReference type="PRO" id="PR:P28482"/>
<dbReference type="Proteomes" id="UP000005640">
    <property type="component" value="Chromosome 22"/>
</dbReference>
<dbReference type="RNAct" id="P28482">
    <property type="molecule type" value="protein"/>
</dbReference>
<dbReference type="Bgee" id="ENSG00000100030">
    <property type="expression patterns" value="Expressed in middle temporal gyrus and 211 other cell types or tissues"/>
</dbReference>
<dbReference type="ExpressionAtlas" id="P28482">
    <property type="expression patterns" value="baseline and differential"/>
</dbReference>
<dbReference type="GO" id="GO:0035578">
    <property type="term" value="C:azurophil granule lumen"/>
    <property type="evidence" value="ECO:0000304"/>
    <property type="project" value="Reactome"/>
</dbReference>
<dbReference type="GO" id="GO:0005901">
    <property type="term" value="C:caveola"/>
    <property type="evidence" value="ECO:0000250"/>
    <property type="project" value="UniProtKB"/>
</dbReference>
<dbReference type="GO" id="GO:0005813">
    <property type="term" value="C:centrosome"/>
    <property type="evidence" value="ECO:0007669"/>
    <property type="project" value="UniProtKB-SubCell"/>
</dbReference>
<dbReference type="GO" id="GO:0036064">
    <property type="term" value="C:ciliary basal body"/>
    <property type="evidence" value="ECO:0000314"/>
    <property type="project" value="HPA"/>
</dbReference>
<dbReference type="GO" id="GO:0005929">
    <property type="term" value="C:cilium"/>
    <property type="evidence" value="ECO:0000314"/>
    <property type="project" value="HPA"/>
</dbReference>
<dbReference type="GO" id="GO:0005737">
    <property type="term" value="C:cytoplasm"/>
    <property type="evidence" value="ECO:0000314"/>
    <property type="project" value="UniProtKB"/>
</dbReference>
<dbReference type="GO" id="GO:0005856">
    <property type="term" value="C:cytoskeleton"/>
    <property type="evidence" value="ECO:0000304"/>
    <property type="project" value="UniProtKB"/>
</dbReference>
<dbReference type="GO" id="GO:0005829">
    <property type="term" value="C:cytosol"/>
    <property type="evidence" value="ECO:0000304"/>
    <property type="project" value="UniProtKB"/>
</dbReference>
<dbReference type="GO" id="GO:0005769">
    <property type="term" value="C:early endosome"/>
    <property type="evidence" value="ECO:0000304"/>
    <property type="project" value="UniProtKB"/>
</dbReference>
<dbReference type="GO" id="GO:0005788">
    <property type="term" value="C:endoplasmic reticulum lumen"/>
    <property type="evidence" value="ECO:0000304"/>
    <property type="project" value="Reactome"/>
</dbReference>
<dbReference type="GO" id="GO:0005576">
    <property type="term" value="C:extracellular region"/>
    <property type="evidence" value="ECO:0000304"/>
    <property type="project" value="Reactome"/>
</dbReference>
<dbReference type="GO" id="GO:1904813">
    <property type="term" value="C:ficolin-1-rich granule lumen"/>
    <property type="evidence" value="ECO:0000304"/>
    <property type="project" value="Reactome"/>
</dbReference>
<dbReference type="GO" id="GO:0005925">
    <property type="term" value="C:focal adhesion"/>
    <property type="evidence" value="ECO:0000304"/>
    <property type="project" value="UniProtKB"/>
</dbReference>
<dbReference type="GO" id="GO:0005794">
    <property type="term" value="C:Golgi apparatus"/>
    <property type="evidence" value="ECO:0000304"/>
    <property type="project" value="UniProtKB"/>
</dbReference>
<dbReference type="GO" id="GO:0005770">
    <property type="term" value="C:late endosome"/>
    <property type="evidence" value="ECO:0000304"/>
    <property type="project" value="UniProtKB"/>
</dbReference>
<dbReference type="GO" id="GO:0015630">
    <property type="term" value="C:microtubule cytoskeleton"/>
    <property type="evidence" value="ECO:0000314"/>
    <property type="project" value="HPA"/>
</dbReference>
<dbReference type="GO" id="GO:0005739">
    <property type="term" value="C:mitochondrion"/>
    <property type="evidence" value="ECO:0000304"/>
    <property type="project" value="UniProtKB"/>
</dbReference>
<dbReference type="GO" id="GO:0072686">
    <property type="term" value="C:mitotic spindle"/>
    <property type="evidence" value="ECO:0000250"/>
    <property type="project" value="UniProtKB"/>
</dbReference>
<dbReference type="GO" id="GO:0005654">
    <property type="term" value="C:nucleoplasm"/>
    <property type="evidence" value="ECO:0000314"/>
    <property type="project" value="HPA"/>
</dbReference>
<dbReference type="GO" id="GO:0005634">
    <property type="term" value="C:nucleus"/>
    <property type="evidence" value="ECO:0000314"/>
    <property type="project" value="UniProtKB"/>
</dbReference>
<dbReference type="GO" id="GO:0005886">
    <property type="term" value="C:plasma membrane"/>
    <property type="evidence" value="ECO:0000250"/>
    <property type="project" value="UniProtKB"/>
</dbReference>
<dbReference type="GO" id="GO:0031143">
    <property type="term" value="C:pseudopodium"/>
    <property type="evidence" value="ECO:0007669"/>
    <property type="project" value="Ensembl"/>
</dbReference>
<dbReference type="GO" id="GO:0045202">
    <property type="term" value="C:synapse"/>
    <property type="evidence" value="ECO:0007669"/>
    <property type="project" value="GOC"/>
</dbReference>
<dbReference type="GO" id="GO:0005524">
    <property type="term" value="F:ATP binding"/>
    <property type="evidence" value="ECO:0007669"/>
    <property type="project" value="UniProtKB-KW"/>
</dbReference>
<dbReference type="GO" id="GO:0003677">
    <property type="term" value="F:DNA binding"/>
    <property type="evidence" value="ECO:0007669"/>
    <property type="project" value="UniProtKB-KW"/>
</dbReference>
<dbReference type="GO" id="GO:0042802">
    <property type="term" value="F:identical protein binding"/>
    <property type="evidence" value="ECO:0000353"/>
    <property type="project" value="IntAct"/>
</dbReference>
<dbReference type="GO" id="GO:0004707">
    <property type="term" value="F:MAP kinase activity"/>
    <property type="evidence" value="ECO:0000314"/>
    <property type="project" value="UniProt"/>
</dbReference>
<dbReference type="GO" id="GO:0019902">
    <property type="term" value="F:phosphatase binding"/>
    <property type="evidence" value="ECO:0000353"/>
    <property type="project" value="UniProtKB"/>
</dbReference>
<dbReference type="GO" id="GO:0001784">
    <property type="term" value="F:phosphotyrosine residue binding"/>
    <property type="evidence" value="ECO:0007669"/>
    <property type="project" value="Ensembl"/>
</dbReference>
<dbReference type="GO" id="GO:0106310">
    <property type="term" value="F:protein serine kinase activity"/>
    <property type="evidence" value="ECO:0007669"/>
    <property type="project" value="RHEA"/>
</dbReference>
<dbReference type="GO" id="GO:0004674">
    <property type="term" value="F:protein serine/threonine kinase activity"/>
    <property type="evidence" value="ECO:0000314"/>
    <property type="project" value="UniProtKB"/>
</dbReference>
<dbReference type="GO" id="GO:0008353">
    <property type="term" value="F:RNA polymerase II CTD heptapeptide repeat kinase activity"/>
    <property type="evidence" value="ECO:0000250"/>
    <property type="project" value="UniProtKB"/>
</dbReference>
<dbReference type="GO" id="GO:0006915">
    <property type="term" value="P:apoptotic process"/>
    <property type="evidence" value="ECO:0000304"/>
    <property type="project" value="ProtInc"/>
</dbReference>
<dbReference type="GO" id="GO:0050853">
    <property type="term" value="P:B cell receptor signaling pathway"/>
    <property type="evidence" value="ECO:0007669"/>
    <property type="project" value="Ensembl"/>
</dbReference>
<dbReference type="GO" id="GO:0060020">
    <property type="term" value="P:Bergmann glial cell differentiation"/>
    <property type="evidence" value="ECO:0007669"/>
    <property type="project" value="Ensembl"/>
</dbReference>
<dbReference type="GO" id="GO:0061308">
    <property type="term" value="P:cardiac neural crest cell development involved in heart development"/>
    <property type="evidence" value="ECO:0007669"/>
    <property type="project" value="Ensembl"/>
</dbReference>
<dbReference type="GO" id="GO:0072584">
    <property type="term" value="P:caveolin-mediated endocytosis"/>
    <property type="evidence" value="ECO:0000304"/>
    <property type="project" value="UniProtKB"/>
</dbReference>
<dbReference type="GO" id="GO:0007166">
    <property type="term" value="P:cell surface receptor signaling pathway"/>
    <property type="evidence" value="ECO:0000318"/>
    <property type="project" value="GO_Central"/>
</dbReference>
<dbReference type="GO" id="GO:0034198">
    <property type="term" value="P:cellular response to amino acid starvation"/>
    <property type="evidence" value="ECO:0000314"/>
    <property type="project" value="CAFA"/>
</dbReference>
<dbReference type="GO" id="GO:0071356">
    <property type="term" value="P:cellular response to tumor necrosis factor"/>
    <property type="evidence" value="ECO:0007669"/>
    <property type="project" value="Ensembl"/>
</dbReference>
<dbReference type="GO" id="GO:0007268">
    <property type="term" value="P:chemical synaptic transmission"/>
    <property type="evidence" value="ECO:0000304"/>
    <property type="project" value="ProtInc"/>
</dbReference>
<dbReference type="GO" id="GO:0006935">
    <property type="term" value="P:chemotaxis"/>
    <property type="evidence" value="ECO:0000304"/>
    <property type="project" value="ProtInc"/>
</dbReference>
<dbReference type="GO" id="GO:0019858">
    <property type="term" value="P:cytosine metabolic process"/>
    <property type="evidence" value="ECO:0007669"/>
    <property type="project" value="Ensembl"/>
</dbReference>
<dbReference type="GO" id="GO:0006974">
    <property type="term" value="P:DNA damage response"/>
    <property type="evidence" value="ECO:0007669"/>
    <property type="project" value="Ensembl"/>
</dbReference>
<dbReference type="GO" id="GO:0007173">
    <property type="term" value="P:epidermal growth factor receptor signaling pathway"/>
    <property type="evidence" value="ECO:0000314"/>
    <property type="project" value="ARUK-UCL"/>
</dbReference>
<dbReference type="GO" id="GO:0038127">
    <property type="term" value="P:ERBB signaling pathway"/>
    <property type="evidence" value="ECO:0000314"/>
    <property type="project" value="UniProtKB"/>
</dbReference>
<dbReference type="GO" id="GO:0038133">
    <property type="term" value="P:ERBB2-ERBB3 signaling pathway"/>
    <property type="evidence" value="ECO:0007669"/>
    <property type="project" value="Ensembl"/>
</dbReference>
<dbReference type="GO" id="GO:0070371">
    <property type="term" value="P:ERK1 and ERK2 cascade"/>
    <property type="evidence" value="ECO:0000314"/>
    <property type="project" value="UniProtKB"/>
</dbReference>
<dbReference type="GO" id="GO:0060324">
    <property type="term" value="P:face development"/>
    <property type="evidence" value="ECO:0007669"/>
    <property type="project" value="Ensembl"/>
</dbReference>
<dbReference type="GO" id="GO:0008286">
    <property type="term" value="P:insulin receptor signaling pathway"/>
    <property type="evidence" value="ECO:0007669"/>
    <property type="project" value="Ensembl"/>
</dbReference>
<dbReference type="GO" id="GO:0048009">
    <property type="term" value="P:insulin-like growth factor receptor signaling pathway"/>
    <property type="evidence" value="ECO:0007669"/>
    <property type="project" value="Ensembl"/>
</dbReference>
<dbReference type="GO" id="GO:0061514">
    <property type="term" value="P:interleukin-34-mediated signaling pathway"/>
    <property type="evidence" value="ECO:0000316"/>
    <property type="project" value="ARUK-UCL"/>
</dbReference>
<dbReference type="GO" id="GO:0035556">
    <property type="term" value="P:intracellular signal transduction"/>
    <property type="evidence" value="ECO:0000318"/>
    <property type="project" value="GO_Central"/>
</dbReference>
<dbReference type="GO" id="GO:0060716">
    <property type="term" value="P:labyrinthine layer blood vessel development"/>
    <property type="evidence" value="ECO:0007669"/>
    <property type="project" value="Ensembl"/>
</dbReference>
<dbReference type="GO" id="GO:0007611">
    <property type="term" value="P:learning or memory"/>
    <property type="evidence" value="ECO:0000303"/>
    <property type="project" value="ARUK-UCL"/>
</dbReference>
<dbReference type="GO" id="GO:0031663">
    <property type="term" value="P:lipopolysaccharide-mediated signaling pathway"/>
    <property type="evidence" value="ECO:0007669"/>
    <property type="project" value="Ensembl"/>
</dbReference>
<dbReference type="GO" id="GO:0060291">
    <property type="term" value="P:long-term synaptic potentiation"/>
    <property type="evidence" value="ECO:0007669"/>
    <property type="project" value="Ensembl"/>
</dbReference>
<dbReference type="GO" id="GO:0060425">
    <property type="term" value="P:lung morphogenesis"/>
    <property type="evidence" value="ECO:0007669"/>
    <property type="project" value="Ensembl"/>
</dbReference>
<dbReference type="GO" id="GO:0033598">
    <property type="term" value="P:mammary gland epithelial cell proliferation"/>
    <property type="evidence" value="ECO:0007669"/>
    <property type="project" value="Ensembl"/>
</dbReference>
<dbReference type="GO" id="GO:0000165">
    <property type="term" value="P:MAPK cascade"/>
    <property type="evidence" value="ECO:0000314"/>
    <property type="project" value="BHF-UCL"/>
</dbReference>
<dbReference type="GO" id="GO:0042552">
    <property type="term" value="P:myelination"/>
    <property type="evidence" value="ECO:0007669"/>
    <property type="project" value="Ensembl"/>
</dbReference>
<dbReference type="GO" id="GO:0045596">
    <property type="term" value="P:negative regulation of cell differentiation"/>
    <property type="evidence" value="ECO:0007669"/>
    <property type="project" value="Ensembl"/>
</dbReference>
<dbReference type="GO" id="GO:0042473">
    <property type="term" value="P:outer ear morphogenesis"/>
    <property type="evidence" value="ECO:0007669"/>
    <property type="project" value="Ensembl"/>
</dbReference>
<dbReference type="GO" id="GO:0018107">
    <property type="term" value="P:peptidyl-threonine phosphorylation"/>
    <property type="evidence" value="ECO:0000250"/>
    <property type="project" value="UniProtKB"/>
</dbReference>
<dbReference type="GO" id="GO:0045542">
    <property type="term" value="P:positive regulation of cholesterol biosynthetic process"/>
    <property type="evidence" value="ECO:0000314"/>
    <property type="project" value="UniProt"/>
</dbReference>
<dbReference type="GO" id="GO:0010759">
    <property type="term" value="P:positive regulation of macrophage chemotaxis"/>
    <property type="evidence" value="ECO:0000316"/>
    <property type="project" value="ARUK-UCL"/>
</dbReference>
<dbReference type="GO" id="GO:0120041">
    <property type="term" value="P:positive regulation of macrophage proliferation"/>
    <property type="evidence" value="ECO:0000316"/>
    <property type="project" value="ARUK-UCL"/>
</dbReference>
<dbReference type="GO" id="GO:0010800">
    <property type="term" value="P:positive regulation of peptidyl-threonine phosphorylation"/>
    <property type="evidence" value="ECO:0000314"/>
    <property type="project" value="UniProtKB"/>
</dbReference>
<dbReference type="GO" id="GO:0032206">
    <property type="term" value="P:positive regulation of telomere maintenance"/>
    <property type="evidence" value="ECO:0000315"/>
    <property type="project" value="BHF-UCL"/>
</dbReference>
<dbReference type="GO" id="GO:0006468">
    <property type="term" value="P:protein phosphorylation"/>
    <property type="evidence" value="ECO:0000314"/>
    <property type="project" value="UniProtKB"/>
</dbReference>
<dbReference type="GO" id="GO:0030641">
    <property type="term" value="P:regulation of cellular pH"/>
    <property type="evidence" value="ECO:0007669"/>
    <property type="project" value="Ensembl"/>
</dbReference>
<dbReference type="GO" id="GO:0051493">
    <property type="term" value="P:regulation of cytoskeleton organization"/>
    <property type="evidence" value="ECO:0000304"/>
    <property type="project" value="UniProtKB"/>
</dbReference>
<dbReference type="GO" id="GO:2000641">
    <property type="term" value="P:regulation of early endosome to late endosome transport"/>
    <property type="evidence" value="ECO:0000304"/>
    <property type="project" value="UniProtKB"/>
</dbReference>
<dbReference type="GO" id="GO:0090170">
    <property type="term" value="P:regulation of Golgi inheritance"/>
    <property type="evidence" value="ECO:0000304"/>
    <property type="project" value="UniProtKB"/>
</dbReference>
<dbReference type="GO" id="GO:0030278">
    <property type="term" value="P:regulation of ossification"/>
    <property type="evidence" value="ECO:0007669"/>
    <property type="project" value="Ensembl"/>
</dbReference>
<dbReference type="GO" id="GO:0031647">
    <property type="term" value="P:regulation of protein stability"/>
    <property type="evidence" value="ECO:0000250"/>
    <property type="project" value="UniProtKB"/>
</dbReference>
<dbReference type="GO" id="GO:0032872">
    <property type="term" value="P:regulation of stress-activated MAPK cascade"/>
    <property type="evidence" value="ECO:0000304"/>
    <property type="project" value="UniProtKB"/>
</dbReference>
<dbReference type="GO" id="GO:0070849">
    <property type="term" value="P:response to epidermal growth factor"/>
    <property type="evidence" value="ECO:0000314"/>
    <property type="project" value="UniProtKB"/>
</dbReference>
<dbReference type="GO" id="GO:0043330">
    <property type="term" value="P:response to exogenous dsRNA"/>
    <property type="evidence" value="ECO:0007669"/>
    <property type="project" value="Ensembl"/>
</dbReference>
<dbReference type="GO" id="GO:0035094">
    <property type="term" value="P:response to nicotine"/>
    <property type="evidence" value="ECO:0000250"/>
    <property type="project" value="ARUK-UCL"/>
</dbReference>
<dbReference type="GO" id="GO:0014044">
    <property type="term" value="P:Schwann cell development"/>
    <property type="evidence" value="ECO:0007669"/>
    <property type="project" value="Ensembl"/>
</dbReference>
<dbReference type="GO" id="GO:0007165">
    <property type="term" value="P:signal transduction"/>
    <property type="evidence" value="ECO:0000304"/>
    <property type="project" value="ProtInc"/>
</dbReference>
<dbReference type="GO" id="GO:0051403">
    <property type="term" value="P:stress-activated MAPK cascade"/>
    <property type="evidence" value="ECO:0000314"/>
    <property type="project" value="CAFA"/>
</dbReference>
<dbReference type="GO" id="GO:0050852">
    <property type="term" value="P:T cell receptor signaling pathway"/>
    <property type="evidence" value="ECO:0007669"/>
    <property type="project" value="Ensembl"/>
</dbReference>
<dbReference type="GO" id="GO:0048538">
    <property type="term" value="P:thymus development"/>
    <property type="evidence" value="ECO:0007669"/>
    <property type="project" value="Ensembl"/>
</dbReference>
<dbReference type="GO" id="GO:0030878">
    <property type="term" value="P:thyroid gland development"/>
    <property type="evidence" value="ECO:0007669"/>
    <property type="project" value="Ensembl"/>
</dbReference>
<dbReference type="GO" id="GO:0060440">
    <property type="term" value="P:trachea formation"/>
    <property type="evidence" value="ECO:0007669"/>
    <property type="project" value="Ensembl"/>
</dbReference>
<dbReference type="CDD" id="cd07849">
    <property type="entry name" value="STKc_ERK1_2_like"/>
    <property type="match status" value="1"/>
</dbReference>
<dbReference type="FunFam" id="1.10.510.10:FF:000624">
    <property type="entry name" value="Mitogen-activated protein kinase"/>
    <property type="match status" value="1"/>
</dbReference>
<dbReference type="FunFam" id="3.30.200.20:FF:000373">
    <property type="entry name" value="Mitogen-activated protein kinase 1"/>
    <property type="match status" value="1"/>
</dbReference>
<dbReference type="Gene3D" id="3.30.200.20">
    <property type="entry name" value="Phosphorylase Kinase, domain 1"/>
    <property type="match status" value="1"/>
</dbReference>
<dbReference type="Gene3D" id="1.10.510.10">
    <property type="entry name" value="Transferase(Phosphotransferase) domain 1"/>
    <property type="match status" value="1"/>
</dbReference>
<dbReference type="InterPro" id="IPR011009">
    <property type="entry name" value="Kinase-like_dom_sf"/>
</dbReference>
<dbReference type="InterPro" id="IPR050117">
    <property type="entry name" value="MAP_kinase"/>
</dbReference>
<dbReference type="InterPro" id="IPR003527">
    <property type="entry name" value="MAP_kinase_CS"/>
</dbReference>
<dbReference type="InterPro" id="IPR008349">
    <property type="entry name" value="MAPK_ERK1/2"/>
</dbReference>
<dbReference type="InterPro" id="IPR000719">
    <property type="entry name" value="Prot_kinase_dom"/>
</dbReference>
<dbReference type="InterPro" id="IPR017441">
    <property type="entry name" value="Protein_kinase_ATP_BS"/>
</dbReference>
<dbReference type="InterPro" id="IPR008271">
    <property type="entry name" value="Ser/Thr_kinase_AS"/>
</dbReference>
<dbReference type="PANTHER" id="PTHR24055">
    <property type="entry name" value="MITOGEN-ACTIVATED PROTEIN KINASE"/>
    <property type="match status" value="1"/>
</dbReference>
<dbReference type="Pfam" id="PF00069">
    <property type="entry name" value="Pkinase"/>
    <property type="match status" value="1"/>
</dbReference>
<dbReference type="PRINTS" id="PR01770">
    <property type="entry name" value="ERK1ERK2MAPK"/>
</dbReference>
<dbReference type="SMART" id="SM00220">
    <property type="entry name" value="S_TKc"/>
    <property type="match status" value="1"/>
</dbReference>
<dbReference type="SUPFAM" id="SSF56112">
    <property type="entry name" value="Protein kinase-like (PK-like)"/>
    <property type="match status" value="1"/>
</dbReference>
<dbReference type="PROSITE" id="PS01351">
    <property type="entry name" value="MAPK"/>
    <property type="match status" value="1"/>
</dbReference>
<dbReference type="PROSITE" id="PS00107">
    <property type="entry name" value="PROTEIN_KINASE_ATP"/>
    <property type="match status" value="1"/>
</dbReference>
<dbReference type="PROSITE" id="PS50011">
    <property type="entry name" value="PROTEIN_KINASE_DOM"/>
    <property type="match status" value="1"/>
</dbReference>
<dbReference type="PROSITE" id="PS00108">
    <property type="entry name" value="PROTEIN_KINASE_ST"/>
    <property type="match status" value="1"/>
</dbReference>
<name>MK01_HUMAN</name>
<accession>P28482</accession>
<accession>A8CZ64</accession>
<proteinExistence type="evidence at protein level"/>
<organism>
    <name type="scientific">Homo sapiens</name>
    <name type="common">Human</name>
    <dbReference type="NCBI Taxonomy" id="9606"/>
    <lineage>
        <taxon>Eukaryota</taxon>
        <taxon>Metazoa</taxon>
        <taxon>Chordata</taxon>
        <taxon>Craniata</taxon>
        <taxon>Vertebrata</taxon>
        <taxon>Euteleostomi</taxon>
        <taxon>Mammalia</taxon>
        <taxon>Eutheria</taxon>
        <taxon>Euarchontoglires</taxon>
        <taxon>Primates</taxon>
        <taxon>Haplorrhini</taxon>
        <taxon>Catarrhini</taxon>
        <taxon>Hominidae</taxon>
        <taxon>Homo</taxon>
    </lineage>
</organism>
<feature type="initiator methionine" description="Removed" evidence="12 77 80 81">
    <location>
        <position position="1"/>
    </location>
</feature>
<feature type="chain" id="PRO_0000186247" description="Mitogen-activated protein kinase 1">
    <location>
        <begin position="2"/>
        <end position="360"/>
    </location>
</feature>
<feature type="domain" description="Protein kinase" evidence="4">
    <location>
        <begin position="25"/>
        <end position="313"/>
    </location>
</feature>
<feature type="DNA-binding region">
    <location>
        <begin position="259"/>
        <end position="277"/>
    </location>
</feature>
<feature type="short sequence motif" description="TXY" evidence="33">
    <location>
        <begin position="185"/>
        <end position="187"/>
    </location>
</feature>
<feature type="short sequence motif" description="Cytoplasmic retention motif" evidence="33">
    <location>
        <begin position="318"/>
        <end position="322"/>
    </location>
</feature>
<feature type="short sequence motif" description="Nuclear translocation motif" evidence="33">
    <location>
        <begin position="327"/>
        <end position="333"/>
    </location>
</feature>
<feature type="active site" description="Proton acceptor" evidence="4 5">
    <location>
        <position position="149"/>
    </location>
</feature>
<feature type="binding site" evidence="4">
    <location>
        <begin position="31"/>
        <end position="39"/>
    </location>
    <ligand>
        <name>ATP</name>
        <dbReference type="ChEBI" id="CHEBI:30616"/>
    </ligand>
</feature>
<feature type="binding site" evidence="4">
    <location>
        <position position="54"/>
    </location>
    <ligand>
        <name>ATP</name>
        <dbReference type="ChEBI" id="CHEBI:30616"/>
    </ligand>
</feature>
<feature type="modified residue" description="N-acetylalanine" evidence="12 77 80 81">
    <location>
        <position position="2"/>
    </location>
</feature>
<feature type="modified residue" description="Phosphoserine; by SGK1" evidence="38">
    <location>
        <position position="29"/>
    </location>
</feature>
<feature type="modified residue" description="Phosphothreonine; by MAP2K1 and MAP2K2" evidence="75 78 79 82">
    <location>
        <position position="185"/>
    </location>
</feature>
<feature type="modified residue" description="Phosphotyrosine; by MAP2K1 and MAP2K2" evidence="35 39 75 78 79 82">
    <location>
        <position position="187"/>
    </location>
</feature>
<feature type="modified residue" description="Phosphothreonine; by autocatalysis" evidence="36">
    <location>
        <position position="190"/>
    </location>
</feature>
<feature type="modified residue" description="Phosphoserine" evidence="33">
    <location>
        <position position="246"/>
    </location>
</feature>
<feature type="modified residue" description="Phosphoserine" evidence="33">
    <location>
        <position position="248"/>
    </location>
</feature>
<feature type="modified residue" description="Phosphoserine" evidence="76">
    <location>
        <position position="284"/>
    </location>
</feature>
<feature type="splice variant" id="VSP_047815" description="In isoform 2." evidence="61">
    <location>
        <begin position="242"/>
        <end position="285"/>
    </location>
</feature>
<feature type="sequence variant" id="VAR_085093" description="In NS13; results in increased MAPK signaling; reduced interaction with DUSP6; no effect on interaction with MAP2K1." evidence="46">
    <original>I</original>
    <variation>N</variation>
    <location>
        <position position="74"/>
    </location>
</feature>
<feature type="sequence variant" id="VAR_085094" description="In NS13; results in increased MAPK signaling; reduced interaction with DUSP6; no effect on interaction with MAP2K1." evidence="46">
    <original>H</original>
    <variation>Y</variation>
    <location>
        <position position="80"/>
    </location>
</feature>
<feature type="sequence variant" id="VAR_085095" description="In NS13; results in increased MAPK signaling; increased translocation to the nucleus; reduced interaction with DUSP6; no effect on interaction with MAP2K1." evidence="46">
    <original>A</original>
    <variation>V</variation>
    <location>
        <position position="174"/>
    </location>
</feature>
<feature type="sequence variant" id="VAR_085096" description="In NS13; results in increased MAPK signaling; increased translocation to the nucleus; reduced interaction with DUSP6; no effect on interaction with MAP2K1." evidence="46">
    <original>D</original>
    <variation>G</variation>
    <location>
        <position position="318"/>
    </location>
</feature>
<feature type="sequence variant" id="VAR_085097" description="In NS13; results in increased MAPK signaling; increased translocation to the nucleus; reduced interaction with DUSP6; no effect on interaction with MAP2K1." evidence="46">
    <original>D</original>
    <variation>N</variation>
    <location>
        <position position="318"/>
    </location>
</feature>
<feature type="sequence variant" id="VAR_085098" description="In NS13." evidence="46">
    <original>E</original>
    <variation>Q</variation>
    <location>
        <position position="322"/>
    </location>
</feature>
<feature type="sequence variant" id="VAR_085099" description="In NS13; results in increased MAPK signaling; increased translocation to the nucleus; reduced interaction with DUSP6; no effect on interaction with MAP2K1." evidence="46">
    <original>P</original>
    <variation>R</variation>
    <location>
        <position position="323"/>
    </location>
</feature>
<feature type="mutagenesis site" description="Does not inhibit interaction with MAP2K1." evidence="34">
    <original>K</original>
    <variation>R</variation>
    <location>
        <position position="54"/>
    </location>
</feature>
<feature type="mutagenesis site" description="Inhibits homodimerization and interaction with TPR." evidence="34">
    <location>
        <begin position="176"/>
        <end position="179"/>
    </location>
</feature>
<feature type="mutagenesis site" description="Inhibits interaction with TPR; when associated with A-187." evidence="34">
    <original>T</original>
    <variation>A</variation>
    <location>
        <position position="185"/>
    </location>
</feature>
<feature type="mutagenesis site" description="Inhibits interaction with TPR; when associated with A-185." evidence="34">
    <original>Y</original>
    <variation>A</variation>
    <location>
        <position position="187"/>
    </location>
</feature>
<feature type="mutagenesis site" description="Inhibits interaction with TPR." evidence="34">
    <original>L</original>
    <variation>A</variation>
    <location>
        <position position="234"/>
    </location>
</feature>
<feature type="mutagenesis site" description="Loss of dephosphorylation by PTPRJ." evidence="34 39">
    <original>D</original>
    <variation>A</variation>
    <location>
        <position position="318"/>
    </location>
</feature>
<feature type="mutagenesis site" description="Inhibits interaction with MAP2K1 but not with TPR; when associated with N-321." evidence="34 39">
    <original>D</original>
    <variation>N</variation>
    <location>
        <position position="318"/>
    </location>
</feature>
<feature type="mutagenesis site" description="Inhibits interaction with MAP2K1 but not with TPR; when associated with N-318." evidence="34">
    <original>D</original>
    <variation>N</variation>
    <location>
        <position position="321"/>
    </location>
</feature>
<feature type="sequence conflict" description="In Ref. 2; CAA77752." evidence="62" ref="2">
    <original>R</original>
    <variation>Q</variation>
    <location>
        <position position="91"/>
    </location>
</feature>
<feature type="helix" evidence="96">
    <location>
        <begin position="2"/>
        <end position="8"/>
    </location>
</feature>
<feature type="strand" evidence="86">
    <location>
        <begin position="12"/>
        <end position="14"/>
    </location>
</feature>
<feature type="strand" evidence="86">
    <location>
        <begin position="17"/>
        <end position="19"/>
    </location>
</feature>
<feature type="turn" evidence="87">
    <location>
        <begin position="22"/>
        <end position="24"/>
    </location>
</feature>
<feature type="strand" evidence="95">
    <location>
        <begin position="25"/>
        <end position="34"/>
    </location>
</feature>
<feature type="strand" evidence="95">
    <location>
        <begin position="37"/>
        <end position="44"/>
    </location>
</feature>
<feature type="turn" evidence="95">
    <location>
        <begin position="45"/>
        <end position="48"/>
    </location>
</feature>
<feature type="strand" evidence="95">
    <location>
        <begin position="49"/>
        <end position="56"/>
    </location>
</feature>
<feature type="strand" evidence="92">
    <location>
        <begin position="59"/>
        <end position="61"/>
    </location>
</feature>
<feature type="helix" evidence="95">
    <location>
        <begin position="62"/>
        <end position="77"/>
    </location>
</feature>
<feature type="strand" evidence="88">
    <location>
        <begin position="81"/>
        <end position="83"/>
    </location>
</feature>
<feature type="strand" evidence="95">
    <location>
        <begin position="88"/>
        <end position="90"/>
    </location>
</feature>
<feature type="turn" evidence="95">
    <location>
        <begin position="95"/>
        <end position="97"/>
    </location>
</feature>
<feature type="strand" evidence="95">
    <location>
        <begin position="101"/>
        <end position="106"/>
    </location>
</feature>
<feature type="strand" evidence="95">
    <location>
        <begin position="109"/>
        <end position="111"/>
    </location>
</feature>
<feature type="helix" evidence="95">
    <location>
        <begin position="112"/>
        <end position="118"/>
    </location>
</feature>
<feature type="helix" evidence="95">
    <location>
        <begin position="123"/>
        <end position="142"/>
    </location>
</feature>
<feature type="helix" evidence="95">
    <location>
        <begin position="152"/>
        <end position="154"/>
    </location>
</feature>
<feature type="strand" evidence="95">
    <location>
        <begin position="155"/>
        <end position="157"/>
    </location>
</feature>
<feature type="turn" evidence="85">
    <location>
        <begin position="159"/>
        <end position="161"/>
    </location>
</feature>
<feature type="strand" evidence="95">
    <location>
        <begin position="163"/>
        <end position="165"/>
    </location>
</feature>
<feature type="helix" evidence="84">
    <location>
        <begin position="168"/>
        <end position="170"/>
    </location>
</feature>
<feature type="helix" evidence="95">
    <location>
        <begin position="176"/>
        <end position="178"/>
    </location>
</feature>
<feature type="turn" evidence="83">
    <location>
        <begin position="181"/>
        <end position="185"/>
    </location>
</feature>
<feature type="helix" evidence="95">
    <location>
        <begin position="191"/>
        <end position="193"/>
    </location>
</feature>
<feature type="helix" evidence="95">
    <location>
        <begin position="196"/>
        <end position="200"/>
    </location>
</feature>
<feature type="strand" evidence="89">
    <location>
        <begin position="201"/>
        <end position="203"/>
    </location>
</feature>
<feature type="helix" evidence="95">
    <location>
        <begin position="208"/>
        <end position="223"/>
    </location>
</feature>
<feature type="helix" evidence="95">
    <location>
        <begin position="233"/>
        <end position="244"/>
    </location>
</feature>
<feature type="helix" evidence="95">
    <location>
        <begin position="249"/>
        <end position="253"/>
    </location>
</feature>
<feature type="helix" evidence="95">
    <location>
        <begin position="258"/>
        <end position="266"/>
    </location>
</feature>
<feature type="helix" evidence="95">
    <location>
        <begin position="275"/>
        <end position="278"/>
    </location>
</feature>
<feature type="strand" evidence="90">
    <location>
        <begin position="280"/>
        <end position="282"/>
    </location>
</feature>
<feature type="helix" evidence="95">
    <location>
        <begin position="284"/>
        <end position="293"/>
    </location>
</feature>
<feature type="turn" evidence="95">
    <location>
        <begin position="298"/>
        <end position="300"/>
    </location>
</feature>
<feature type="helix" evidence="95">
    <location>
        <begin position="304"/>
        <end position="308"/>
    </location>
</feature>
<feature type="helix" evidence="95">
    <location>
        <begin position="311"/>
        <end position="313"/>
    </location>
</feature>
<feature type="turn" evidence="95">
    <location>
        <begin position="314"/>
        <end position="316"/>
    </location>
</feature>
<feature type="helix" evidence="95">
    <location>
        <begin position="319"/>
        <end position="321"/>
    </location>
</feature>
<feature type="helix" evidence="91">
    <location>
        <begin position="331"/>
        <end position="334"/>
    </location>
</feature>
<feature type="helix" evidence="94">
    <location>
        <begin position="335"/>
        <end position="337"/>
    </location>
</feature>
<feature type="helix" evidence="95">
    <location>
        <begin position="340"/>
        <end position="350"/>
    </location>
</feature>
<feature type="helix" evidence="95">
    <location>
        <begin position="352"/>
        <end position="354"/>
    </location>
</feature>
<feature type="strand" evidence="93">
    <location>
        <begin position="355"/>
        <end position="357"/>
    </location>
</feature>
<keyword id="KW-0002">3D-structure</keyword>
<keyword id="KW-0007">Acetylation</keyword>
<keyword id="KW-0025">Alternative splicing</keyword>
<keyword id="KW-0053">Apoptosis</keyword>
<keyword id="KW-0067">ATP-binding</keyword>
<keyword id="KW-0131">Cell cycle</keyword>
<keyword id="KW-0965">Cell junction</keyword>
<keyword id="KW-0963">Cytoplasm</keyword>
<keyword id="KW-0206">Cytoskeleton</keyword>
<keyword id="KW-0903">Direct protein sequencing</keyword>
<keyword id="KW-0225">Disease variant</keyword>
<keyword id="KW-0238">DNA-binding</keyword>
<keyword id="KW-0945">Host-virus interaction</keyword>
<keyword id="KW-0418">Kinase</keyword>
<keyword id="KW-0472">Membrane</keyword>
<keyword id="KW-0547">Nucleotide-binding</keyword>
<keyword id="KW-0539">Nucleus</keyword>
<keyword id="KW-0597">Phosphoprotein</keyword>
<keyword id="KW-1267">Proteomics identification</keyword>
<keyword id="KW-1185">Reference proteome</keyword>
<keyword id="KW-0678">Repressor</keyword>
<keyword id="KW-0723">Serine/threonine-protein kinase</keyword>
<keyword id="KW-0804">Transcription</keyword>
<keyword id="KW-0805">Transcription regulation</keyword>
<keyword id="KW-0808">Transferase</keyword>
<keyword id="KW-0832">Ubl conjugation</keyword>
<sequence>MAAAAAAGAGPEMVRGQVFDVGPRYTNLSYIGEGAYGMVCSAYDNVNKVRVAIKKISPFEHQTYCQRTLREIKILLRFRHENIIGINDIIRAPTIEQMKDVYIVQDLMETDLYKLLKTQHLSNDHICYFLYQILRGLKYIHSANVLHRDLKPSNLLLNTTCDLKICDFGLARVADPDHDHTGFLTEYVATRWYRAPEIMLNSKGYTKSIDIWSVGCILAEMLSNRPIFPGKHYLDQLNHILGILGSPSQEDLNCIINLKARNYLLSLPHKNKVPWNRLFPNADSKALDLLDKMLTFNPHKRIEVEQALAHPYLEQYYDPSDEPIAEAPFKFDMELDDLPKEKLKELIFEETARFQPGYRS</sequence>
<comment type="function">
    <text evidence="3 6 7 8 10 11 13 14 15 16 17 19 20 21 22 26 34 37 41 42 44 46 48 49 51 52 53 54 57 58 59 60">Serine/threonine kinase which acts as an essential component of the MAP kinase signal transduction pathway. MAPK1/ERK2 and MAPK3/ERK1 are the 2 MAPKs which play an important role in the MAPK/ERK cascade. They participate also in a signaling cascade initiated by activated KIT and KITLG/SCF. Depending on the cellular context, the MAPK/ERK cascade mediates diverse biological functions such as cell growth, adhesion, survival and differentiation through the regulation of transcription, translation, cytoskeletal rearrangements. The MAPK/ERK cascade also plays a role in initiation and regulation of meiosis, mitosis, and postmitotic functions in differentiated cells by phosphorylating a number of transcription factors. About 160 substrates have already been discovered for ERKs. Many of these substrates are localized in the nucleus, and seem to participate in the regulation of transcription upon stimulation. However, other substrates are found in the cytosol as well as in other cellular organelles, and those are responsible for processes such as translation, mitosis and apoptosis. Moreover, the MAPK/ERK cascade is also involved in the regulation of the endosomal dynamics, including lysosome processing and endosome cycling through the perinuclear recycling compartment (PNRC); as well as in the fragmentation of the Golgi apparatus during mitosis. The substrates include transcription factors (such as ATF2, BCL6, ELK1, ERF, FOS, HSF4 or SPZ1), cytoskeletal elements (such as CANX, CTTN, GJA1, MAP2, MAPT, PXN, SORBS3 or STMN1), regulators of apoptosis (such as BAD, BTG2, CASP9, DAPK1, IER3, MCL1 or PPARG), regulators of translation (such as EIF4EBP1 and FXR1) and a variety of other signaling-related molecules (like ARHGEF2, DCC, FRS2 or GRB10). Protein kinases (such as RAF1, RPS6KA1/RSK1, RPS6KA3/RSK2, RPS6KA2/RSK3, RPS6KA6/RSK4, SYK, MKNK1/MNK1, MKNK2/MNK2, RPS6KA5/MSK1, RPS6KA4/MSK2, MAPKAPK3 or MAPKAPK5) and phosphatases (such as DUSP1, DUSP4, DUSP6 or DUSP16) are other substrates which enable the propagation the MAPK/ERK signal to additional cytosolic and nuclear targets, thereby extending the specificity of the cascade. Mediates phosphorylation of TPR in response to EGF stimulation. May play a role in the spindle assembly checkpoint. Phosphorylates PML and promotes its interaction with PIN1, leading to PML degradation. Phosphorylates CDK2AP2 (By similarity). Phosphorylates phosphoglycerate kinase PGK1 under hypoxic conditions to promote its targeting to the mitochondrion and suppress the formation of acetyl-coenzyme A from pyruvate (PubMed:26942675).</text>
</comment>
<comment type="function">
    <text evidence="41">Acts as a transcriptional repressor. Binds to a [GC]AAA[GC] consensus sequence. Repress the expression of interferon gamma-induced genes. Seems to bind to the promoter of CCL5, DMP1, IFIH1, IFITM1, IRF7, IRF9, LAMP3, OAS1, OAS2, OAS3 and STAT1. Transcriptional activity is independent of kinase activity.</text>
</comment>
<comment type="catalytic activity">
    <reaction evidence="44">
        <text>L-seryl-[protein] + ATP = O-phospho-L-seryl-[protein] + ADP + H(+)</text>
        <dbReference type="Rhea" id="RHEA:17989"/>
        <dbReference type="Rhea" id="RHEA-COMP:9863"/>
        <dbReference type="Rhea" id="RHEA-COMP:11604"/>
        <dbReference type="ChEBI" id="CHEBI:15378"/>
        <dbReference type="ChEBI" id="CHEBI:29999"/>
        <dbReference type="ChEBI" id="CHEBI:30616"/>
        <dbReference type="ChEBI" id="CHEBI:83421"/>
        <dbReference type="ChEBI" id="CHEBI:456216"/>
        <dbReference type="EC" id="2.7.11.24"/>
    </reaction>
</comment>
<comment type="catalytic activity">
    <reaction>
        <text>L-threonyl-[protein] + ATP = O-phospho-L-threonyl-[protein] + ADP + H(+)</text>
        <dbReference type="Rhea" id="RHEA:46608"/>
        <dbReference type="Rhea" id="RHEA-COMP:11060"/>
        <dbReference type="Rhea" id="RHEA-COMP:11605"/>
        <dbReference type="ChEBI" id="CHEBI:15378"/>
        <dbReference type="ChEBI" id="CHEBI:30013"/>
        <dbReference type="ChEBI" id="CHEBI:30616"/>
        <dbReference type="ChEBI" id="CHEBI:61977"/>
        <dbReference type="ChEBI" id="CHEBI:456216"/>
        <dbReference type="EC" id="2.7.11.24"/>
    </reaction>
</comment>
<comment type="cofactor">
    <cofactor evidence="1">
        <name>Mg(2+)</name>
        <dbReference type="ChEBI" id="CHEBI:18420"/>
    </cofactor>
</comment>
<comment type="activity regulation">
    <text evidence="11 36">Phosphorylated by MAP2K1/MEK1 and MAP2K2/MEK2 on Thr-185 and Tyr-187 in response to external stimuli like insulin or NGF. Both phosphorylations are required for activity. This phosphorylation causes dramatic conformational changes, which enable full activation and interaction of MAPK1/ERK2 with its substrates. Phosphorylation on Ser-29 by SGK1 results in its activation by enhancing its interaction with MAP2K1/MEK1 and MAP2K2/MEK2. Dephosphorylated and inactivated by DUSP1, DUSP3, DUSP6 and DUSP9. Inactivated by pyrimidylpyrrole inhibitors.</text>
</comment>
<comment type="subunit">
    <text evidence="2 3 9 11 18 19 23 24 26 27 29 30 31 32 33 34 36 38 40 42 43 44 45 46 52 55 56">Binds both upstream activators and downstream substrates in multimolecular complexes. This interaction inhibits its tyrosine-kinase activity. Interacts with ADAM15, ARHGEF2, ARRB2, DAPK1 (via death domain), HSF4, IER3, IPO7, NISCH, SGK1, and isoform 1 of NEK2. Interacts (via phosphorylated form) with TPR (via C-terminal region and phosphorylated form); the interaction requires dimerization of MAPK1/ERK2 and increases following EGF stimulation (PubMed:18794356). Interacts with MAP2K1 (PubMed:32721402). Interacts with DUSP6 (PubMed:32721402, PubMed:9596579). Interacts (phosphorylated form) with CAV2 ('Tyr-19'-phosphorylated form); the interaction, promoted by insulin, leads to nuclear location and MAPK1 activation. Interacts with MORG1, PEA15 and MKNK2 (By similarity). MKNK2 isoform 1 binding prevents from dephosphorylation and inactivation (By similarity). Interacts with DCC (By similarity). The phosphorylated form interacts with PML (isoform PML-4). Interacts with STYX. Interacts with CDK2AP2. Interacts with CAVIN4 (By similarity). Interacts with DUSP7; the interaction enhances DUSP7 phosphatase activity (PubMed:9788880). Interacts with GIT1; this interaction is necessary for MAPK1 localization to focal adhesions (By similarity). Interacts with ZNF263 (PubMed:32051553). Interacts with phosphoglycerate kinase PGK1; the interaction is direct, occurs under hypoxic conditions, and promotes interaction between PGK1 and PIN1 (PubMed:26942675).</text>
</comment>
<comment type="subunit">
    <text evidence="50">(Microbial infection) Interacts with HIV-1 Nef through its SH3 domain.</text>
</comment>
<comment type="interaction">
    <interactant intactId="EBI-959949">
        <id>P28482</id>
    </interactant>
    <interactant intactId="EBI-77613">
        <id>P05067</id>
        <label>APP</label>
    </interactant>
    <organismsDiffer>false</organismsDiffer>
    <experiments>3</experiments>
</comment>
<comment type="interaction">
    <interactant intactId="EBI-959949">
        <id>P28482</id>
    </interactant>
    <interactant intactId="EBI-7410441">
        <id>P53004</id>
        <label>BLVRA</label>
    </interactant>
    <organismsDiffer>false</organismsDiffer>
    <experiments>2</experiments>
</comment>
<comment type="interaction">
    <interactant intactId="EBI-959949">
        <id>P28482</id>
    </interactant>
    <interactant intactId="EBI-718947">
        <id>P15882</id>
        <label>CHN1</label>
    </interactant>
    <organismsDiffer>false</organismsDiffer>
    <experiments>3</experiments>
</comment>
<comment type="interaction">
    <interactant intactId="EBI-959949">
        <id>P28482</id>
    </interactant>
    <interactant intactId="EBI-486838">
        <id>Q7L5N1</id>
        <label>COPS6</label>
    </interactant>
    <organismsDiffer>false</organismsDiffer>
    <experiments>2</experiments>
</comment>
<comment type="interaction">
    <interactant intactId="EBI-959949">
        <id>P28482</id>
    </interactant>
    <interactant intactId="EBI-975493">
        <id>P28562</id>
        <label>DUSP1</label>
    </interactant>
    <organismsDiffer>false</organismsDiffer>
    <experiments>3</experiments>
</comment>
<comment type="interaction">
    <interactant intactId="EBI-959949">
        <id>P28482</id>
    </interactant>
    <interactant intactId="EBI-6591081">
        <id>Q13115</id>
        <label>DUSP4</label>
    </interactant>
    <organismsDiffer>false</organismsDiffer>
    <experiments>6</experiments>
</comment>
<comment type="interaction">
    <interactant intactId="EBI-959949">
        <id>P28482</id>
    </interactant>
    <interactant intactId="EBI-7487376">
        <id>Q16690</id>
        <label>DUSP5</label>
    </interactant>
    <organismsDiffer>false</organismsDiffer>
    <experiments>3</experiments>
</comment>
<comment type="interaction">
    <interactant intactId="EBI-959949">
        <id>P28482</id>
    </interactant>
    <interactant intactId="EBI-746870">
        <id>Q16828</id>
        <label>DUSP6</label>
    </interactant>
    <organismsDiffer>false</organismsDiffer>
    <experiments>5</experiments>
</comment>
<comment type="interaction">
    <interactant intactId="EBI-959949">
        <id>P28482</id>
    </interactant>
    <interactant intactId="EBI-1265847">
        <id>Q16829</id>
        <label>DUSP7</label>
    </interactant>
    <organismsDiffer>false</organismsDiffer>
    <experiments>2</experiments>
</comment>
<comment type="interaction">
    <interactant intactId="EBI-959949">
        <id>P28482</id>
    </interactant>
    <interactant intactId="EBI-3906678">
        <id>Q99956</id>
        <label>DUSP9</label>
    </interactant>
    <organismsDiffer>false</organismsDiffer>
    <experiments>5</experiments>
</comment>
<comment type="interaction">
    <interactant intactId="EBI-959949">
        <id>P28482</id>
    </interactant>
    <interactant intactId="EBI-741037">
        <id>Q9BRK4</id>
        <label>LZTS2</label>
    </interactant>
    <organismsDiffer>false</organismsDiffer>
    <experiments>4</experiments>
</comment>
<comment type="interaction">
    <interactant intactId="EBI-959949">
        <id>P28482</id>
    </interactant>
    <interactant intactId="EBI-492564">
        <id>Q02750</id>
        <label>MAP2K1</label>
    </interactant>
    <organismsDiffer>false</organismsDiffer>
    <experiments>2</experiments>
</comment>
<comment type="interaction">
    <interactant intactId="EBI-959949">
        <id>P28482</id>
    </interactant>
    <interactant intactId="EBI-959949">
        <id>P28482</id>
        <label>MAPK1</label>
    </interactant>
    <organismsDiffer>false</organismsDiffer>
    <experiments>3</experiments>
</comment>
<comment type="interaction">
    <interactant intactId="EBI-959949">
        <id>P28482</id>
    </interactant>
    <interactant intactId="EBI-6932370">
        <id>Q16539-3</id>
        <label>MAPK14</label>
    </interactant>
    <organismsDiffer>false</organismsDiffer>
    <experiments>5</experiments>
</comment>
<comment type="interaction">
    <interactant intactId="EBI-959949">
        <id>P28482</id>
    </interactant>
    <interactant intactId="EBI-724076">
        <id>Q99750</id>
        <label>MDFI</label>
    </interactant>
    <organismsDiffer>false</organismsDiffer>
    <experiments>3</experiments>
</comment>
<comment type="interaction">
    <interactant intactId="EBI-959949">
        <id>P28482</id>
    </interactant>
    <interactant intactId="EBI-73837">
        <id>Q9BUB5</id>
        <label>MKNK1</label>
    </interactant>
    <organismsDiffer>false</organismsDiffer>
    <experiments>11</experiments>
</comment>
<comment type="interaction">
    <interactant intactId="EBI-959949">
        <id>P28482</id>
    </interactant>
    <interactant intactId="EBI-6447480">
        <id>P35548</id>
        <label>MSX2</label>
    </interactant>
    <organismsDiffer>false</organismsDiffer>
    <experiments>3</experiments>
</comment>
<comment type="interaction">
    <interactant intactId="EBI-959949">
        <id>P28482</id>
    </interactant>
    <interactant intactId="EBI-714410">
        <id>Q15121</id>
        <label>PEA15</label>
    </interactant>
    <organismsDiffer>false</organismsDiffer>
    <experiments>5</experiments>
</comment>
<comment type="interaction">
    <interactant intactId="EBI-959949">
        <id>P28482</id>
    </interactant>
    <interactant intactId="EBI-2876622">
        <id>Q9UPG8</id>
        <label>PLAGL2</label>
    </interactant>
    <organismsDiffer>false</organismsDiffer>
    <experiments>3</experiments>
</comment>
<comment type="interaction">
    <interactant intactId="EBI-959949">
        <id>P28482</id>
    </interactant>
    <interactant intactId="EBI-347928">
        <id>P62487</id>
        <label>POLR2G</label>
    </interactant>
    <organismsDiffer>false</organismsDiffer>
    <experiments>3</experiments>
</comment>
<comment type="interaction">
    <interactant intactId="EBI-959949">
        <id>P28482</id>
    </interactant>
    <interactant intactId="EBI-989143">
        <id>P35813</id>
        <label>PPM1A</label>
    </interactant>
    <organismsDiffer>false</organismsDiffer>
    <experiments>19</experiments>
</comment>
<comment type="interaction">
    <interactant intactId="EBI-959949">
        <id>P28482</id>
    </interactant>
    <interactant intactId="EBI-2557469">
        <id>Q6NYC8</id>
        <label>PPP1R18</label>
    </interactant>
    <organismsDiffer>false</organismsDiffer>
    <experiments>3</experiments>
</comment>
<comment type="interaction">
    <interactant intactId="EBI-959949">
        <id>P28482</id>
    </interactant>
    <interactant intactId="EBI-359352">
        <id>P25786</id>
        <label>PSMA1</label>
    </interactant>
    <organismsDiffer>false</organismsDiffer>
    <experiments>3</experiments>
</comment>
<comment type="interaction">
    <interactant intactId="EBI-959949">
        <id>P28482</id>
    </interactant>
    <interactant intactId="EBI-11603375">
        <id>A2A3K4</id>
        <label>PTPDC1</label>
    </interactant>
    <organismsDiffer>false</organismsDiffer>
    <experiments>4</experiments>
</comment>
<comment type="interaction">
    <interactant intactId="EBI-959949">
        <id>P28482</id>
    </interactant>
    <interactant intactId="EBI-2265723">
        <id>P35236</id>
        <label>PTPN7</label>
    </interactant>
    <organismsDiffer>false</organismsDiffer>
    <experiments>6</experiments>
</comment>
<comment type="interaction">
    <interactant intactId="EBI-959949">
        <id>P28482</id>
    </interactant>
    <interactant intactId="EBI-2264500">
        <id>Q12913</id>
        <label>PTPRJ</label>
    </interactant>
    <organismsDiffer>false</organismsDiffer>
    <experiments>7</experiments>
</comment>
<comment type="interaction">
    <interactant intactId="EBI-959949">
        <id>P28482</id>
    </interactant>
    <interactant intactId="EBI-2265659">
        <id>Q15256</id>
        <label>PTPRR</label>
    </interactant>
    <organismsDiffer>false</organismsDiffer>
    <experiments>4</experiments>
</comment>
<comment type="interaction">
    <interactant intactId="EBI-959949">
        <id>P28482</id>
    </interactant>
    <interactant intactId="EBI-18347359">
        <id>Q15256-5</id>
        <label>PTPRR</label>
    </interactant>
    <organismsDiffer>false</organismsDiffer>
    <experiments>3</experiments>
</comment>
<comment type="interaction">
    <interactant intactId="EBI-959949">
        <id>P28482</id>
    </interactant>
    <interactant intactId="EBI-373337">
        <id>O76064</id>
        <label>RNF8</label>
    </interactant>
    <organismsDiffer>false</organismsDiffer>
    <experiments>3</experiments>
</comment>
<comment type="interaction">
    <interactant intactId="EBI-959949">
        <id>P28482</id>
    </interactant>
    <interactant intactId="EBI-963034">
        <id>Q15418</id>
        <label>RPS6KA1</label>
    </interactant>
    <organismsDiffer>false</organismsDiffer>
    <experiments>12</experiments>
</comment>
<comment type="interaction">
    <interactant intactId="EBI-959949">
        <id>P28482</id>
    </interactant>
    <interactant intactId="EBI-1384149">
        <id>Q15349</id>
        <label>RPS6KA2</label>
    </interactant>
    <organismsDiffer>false</organismsDiffer>
    <experiments>12</experiments>
</comment>
<comment type="interaction">
    <interactant intactId="EBI-959949">
        <id>P28482</id>
    </interactant>
    <interactant intactId="EBI-1046616">
        <id>P51812</id>
        <label>RPS6KA3</label>
    </interactant>
    <organismsDiffer>false</organismsDiffer>
    <experiments>12</experiments>
</comment>
<comment type="interaction">
    <interactant intactId="EBI-959949">
        <id>P28482</id>
    </interactant>
    <interactant intactId="EBI-1000553">
        <id>P29353-2</id>
        <label>SHC1</label>
    </interactant>
    <organismsDiffer>false</organismsDiffer>
    <experiments>4</experiments>
</comment>
<comment type="interaction">
    <interactant intactId="EBI-959949">
        <id>P28482</id>
    </interactant>
    <interactant intactId="EBI-960169">
        <id>P61764</id>
        <label>STXBP1</label>
    </interactant>
    <organismsDiffer>false</organismsDiffer>
    <experiments>3</experiments>
</comment>
<comment type="interaction">
    <interactant intactId="EBI-959949">
        <id>P28482</id>
    </interactant>
    <interactant intactId="EBI-11741437">
        <id>Q08117-2</id>
        <label>TLE5</label>
    </interactant>
    <organismsDiffer>false</organismsDiffer>
    <experiments>3</experiments>
</comment>
<comment type="interaction">
    <interactant intactId="EBI-959949">
        <id>P28482</id>
    </interactant>
    <interactant intactId="EBI-722888">
        <id>Q9Y296</id>
        <label>TRAPPC4</label>
    </interactant>
    <organismsDiffer>false</organismsDiffer>
    <experiments>3</experiments>
</comment>
<comment type="interaction">
    <interactant intactId="EBI-959949">
        <id>P28482</id>
    </interactant>
    <interactant intactId="EBI-12287587">
        <id>B2RXF5</id>
        <label>ZBTB42</label>
    </interactant>
    <organismsDiffer>false</organismsDiffer>
    <experiments>3</experiments>
</comment>
<comment type="interaction">
    <interactant intactId="EBI-959949">
        <id>P28482</id>
    </interactant>
    <interactant intactId="EBI-12903728">
        <id>A0A384NQ31</id>
    </interactant>
    <organismsDiffer>false</organismsDiffer>
    <experiments>3</experiments>
</comment>
<comment type="interaction">
    <interactant intactId="EBI-959949">
        <id>P28482</id>
    </interactant>
    <interactant intactId="EBI-98330">
        <id>Q9U1H0</id>
        <label>cic</label>
    </interactant>
    <organismsDiffer>true</organismsDiffer>
    <experiments>2</experiments>
</comment>
<comment type="interaction">
    <interactant intactId="EBI-959949">
        <id>P28482</id>
    </interactant>
    <interactant intactId="EBI-7898692">
        <id>Q05922</id>
        <label>Dusp2</label>
    </interactant>
    <organismsDiffer>true</organismsDiffer>
    <experiments>2</experiments>
</comment>
<comment type="interaction">
    <interactant intactId="EBI-959949">
        <id>P28482</id>
    </interactant>
    <interactant intactId="EBI-908215">
        <id>P02687</id>
        <label>MBP</label>
    </interactant>
    <organismsDiffer>true</organismsDiffer>
    <experiments>2</experiments>
</comment>
<comment type="interaction">
    <interactant intactId="EBI-959949">
        <id>P28482</id>
    </interactant>
    <interactant intactId="EBI-6506625">
        <id>Q8VSP9</id>
        <label>ospF</label>
    </interactant>
    <organismsDiffer>true</organismsDiffer>
    <experiments>5</experiments>
</comment>
<comment type="interaction">
    <interactant intactId="EBI-959949">
        <id>P28482</id>
    </interactant>
    <interactant intactId="EBI-15676035">
        <id>P0A2M9</id>
        <label>spvC</label>
    </interactant>
    <organismsDiffer>true</organismsDiffer>
    <experiments>3</experiments>
</comment>
<comment type="interaction">
    <interactant intactId="EBI-959949">
        <id>P28482</id>
    </interactant>
    <interactant intactId="EBI-8015758">
        <id>Q69559</id>
        <label>U24</label>
    </interactant>
    <organismsDiffer>true</organismsDiffer>
    <experiments>2</experiments>
</comment>
<comment type="subcellular location">
    <subcellularLocation>
        <location evidence="1">Cytoplasm</location>
        <location evidence="1">Cytoskeleton</location>
        <location evidence="1">Spindle</location>
    </subcellularLocation>
    <subcellularLocation>
        <location evidence="46">Nucleus</location>
    </subcellularLocation>
    <subcellularLocation>
        <location>Cytoplasm</location>
        <location>Cytoskeleton</location>
        <location>Microtubule organizing center</location>
        <location>Centrosome</location>
    </subcellularLocation>
    <subcellularLocation>
        <location evidence="46">Cytoplasm</location>
    </subcellularLocation>
    <subcellularLocation>
        <location evidence="3">Membrane</location>
        <location evidence="3">Caveola</location>
    </subcellularLocation>
    <subcellularLocation>
        <location evidence="2">Cell junction</location>
        <location evidence="2">Focal adhesion</location>
    </subcellularLocation>
    <text evidence="1">Associated with the spindle during prometaphase and metaphase (By similarity). PEA15-binding and phosphorylated DAPK1 promote its cytoplasmic retention. Phosphorylation at Ser- 246 and Ser-248 as well as autophosphorylation at Thr-190 promote nuclear localization.</text>
</comment>
<comment type="alternative products">
    <event type="alternative splicing"/>
    <isoform>
        <id>P28482-1</id>
        <name>1</name>
        <sequence type="displayed"/>
    </isoform>
    <isoform>
        <id>P28482-2</id>
        <name>2</name>
        <sequence type="described" ref="VSP_047815"/>
    </isoform>
</comment>
<comment type="domain">
    <text>The TXY motif contains the threonine and tyrosine residues whose phosphorylation activates the MAP kinases.</text>
</comment>
<comment type="PTM">
    <text evidence="1 2 25 28 33 35 36 37 38 39">Phosphorylated upon KIT and FLT3 signaling (By similarity). Dually phosphorylated on Thr-185 and Tyr-187, which activates the enzyme. Undergoes regulatory phosphorylation on additional residues such as Ser-246 and Ser-248 in the kinase insert domain (KID) These phosphorylations, which are probably mediated by more than one kinase, are important for binding of MAPK1/ERK2 to importin-7 (IPO7) and its nuclear translocation. In addition, autophosphorylation of Thr-190 was shown to affect the subcellular localization of MAPK1/ERK2 as well. Ligand-activated ALK induces tyrosine phosphorylation. Dephosphorylated by PTPRJ at Tyr-187. Phosphorylation on Ser-29 by SGK1 results in its activation by enhancing its interaction with MAP2K1/MEK1 and MAP2K2/MEK2. DUSP3 and DUSP6 dephosphorylate specifically MAPK1/ERK2 and MAPK3/ERK1 whereas DUSP9 dephosphorylates a broader range of MAPKs. Dephosphorylated by DUSP1 and DUSP2 at Thr-185 and Tyr-187 (By similarity) (PubMed:16288922).</text>
</comment>
<comment type="PTM">
    <text evidence="1">ISGylated.</text>
</comment>
<comment type="PTM">
    <text evidence="47">Ubiquitinated by TRIM15 via 'Lys-63'-linked ubiquitination; leading to activation. Deubiquitinated by CYLD.</text>
</comment>
<comment type="disease" evidence="46">
    <disease id="DI-05961">
        <name>Noonan syndrome 13</name>
        <acronym>NS13</acronym>
        <description>A form of Noonan syndrome, a disease characterized by short stature, facial dysmorphic features such as hypertelorism, a downward eyeslant and low-set posteriorly rotated ears, and a high incidence of congenital heart defects and hypertrophic cardiomyopathy. Other features can include a short neck with webbing or redundancy of skin, deafness, motor delay, variable intellectual deficits, multiple skeletal defects, cryptorchidism, and bleeding diathesis. Individuals with Noonan syndrome are at risk of juvenile myelomonocytic leukemia, a myeloproliferative disorder characterized by excessive production of myelomonocytic cells. NS13 inheritance is autosomal dominant. There is considerable variability in severity.</description>
        <dbReference type="MIM" id="619087"/>
    </disease>
    <text>The disease is caused by variants affecting the gene represented in this entry.</text>
</comment>
<comment type="similarity">
    <text evidence="62">Belongs to the protein kinase superfamily. CMGC Ser/Thr protein kinase family. MAP kinase subfamily.</text>
</comment>
<comment type="sequence caution" evidence="62">
    <conflict type="erroneous initiation">
        <sequence resource="EMBL-CDS" id="CAA77753"/>
    </conflict>
    <text>Truncated N-terminus.</text>
</comment>
<comment type="online information" name="Wikipedia">
    <link uri="https://en.wikipedia.org/wiki/Extracellular_signal-regulated_kinase"/>
    <text>Extracellular signal-regulated kinase entry</text>
</comment>
<comment type="online information" name="Atlas of Genetics and Cytogenetics in Oncology and Haematology">
    <link uri="https://atlasgeneticsoncology.org/gene/41288/MAPK1"/>
</comment>
<gene>
    <name evidence="63" type="primary">MAPK1</name>
    <name type="synonym">ERK2</name>
    <name type="synonym">PRKM1</name>
    <name type="synonym">PRKM2</name>
</gene>